<sequence length="685" mass="77423">MDVCVRLALWLLWGLLLHQGQSLSHSHSEKATGTSSGANSEESTAAEFCRIDKPLCHSEDEKLSFEAVRNIHKLMDDDANGDVDVEESDEFLREDLNYHDPTVKHSTFHGEDKLISVEDLWKAWKSSEVYNWTVDEVVQWLITYVELPQYEETFRKLQLSGHAMPRLAVTNTTMTGTVLKMTDRSHRQKLQLKALDTVLFGPPLLTRHNHLKDFMLVVSIVIGVGGCWFAYIQNRYSKEHMKKMMKDLEGLHRAEQSLHDLQERLHKAQEEHRTVEVEKVHLEKKLRDEINLAKQEAQRLKELREGTENERSRQKYAEEELEQVREALRKAEKELESHSSWYAPEALQKWLQLTHEVEVQYYNIKKQNAEKQLLVAKEGAEKIKKKRNTLFGTFHVAHSSSLDDVDHKILTAKQALSEVTAALRERLHRWQQIEILCGFQIVNNPGIHSLVAALNIDPSWMGSTRPNPAHFIMTDDVDDMDEEIVSPLSMQSPSLQSSVRQRLTEPQHGLGSQRDLTHSDSESSLHMSDRQRVAPKPPQMSRAADEALNAMTSNGSHRLIEGVHPGSLVEKLPDSPALAKKALLALNHGLDKAHSLMELSPSAPPGGSPHLDSSRSHSPSSPDPDTPSPVGDSRALQASRNTRIPHLAGKKAVAEEDNGSIGEETDSSPGRKKFPLKIFKKPLKK</sequence>
<organism>
    <name type="scientific">Homo sapiens</name>
    <name type="common">Human</name>
    <dbReference type="NCBI Taxonomy" id="9606"/>
    <lineage>
        <taxon>Eukaryota</taxon>
        <taxon>Metazoa</taxon>
        <taxon>Chordata</taxon>
        <taxon>Craniata</taxon>
        <taxon>Vertebrata</taxon>
        <taxon>Euteleostomi</taxon>
        <taxon>Mammalia</taxon>
        <taxon>Eutheria</taxon>
        <taxon>Euarchontoglires</taxon>
        <taxon>Primates</taxon>
        <taxon>Haplorrhini</taxon>
        <taxon>Catarrhini</taxon>
        <taxon>Hominidae</taxon>
        <taxon>Homo</taxon>
    </lineage>
</organism>
<feature type="signal peptide" evidence="2">
    <location>
        <begin position="1"/>
        <end position="22"/>
    </location>
</feature>
<feature type="chain" id="PRO_0000033326" description="Stromal interaction molecule 1">
    <location>
        <begin position="23"/>
        <end position="685"/>
    </location>
</feature>
<feature type="topological domain" description="Extracellular" evidence="2">
    <location>
        <begin position="23"/>
        <end position="213"/>
    </location>
</feature>
<feature type="transmembrane region" description="Helical" evidence="2">
    <location>
        <begin position="214"/>
        <end position="234"/>
    </location>
</feature>
<feature type="topological domain" description="Cytoplasmic" evidence="2">
    <location>
        <begin position="235"/>
        <end position="685"/>
    </location>
</feature>
<feature type="domain" description="EF-hand 1" evidence="18">
    <location>
        <begin position="64"/>
        <end position="97"/>
    </location>
</feature>
<feature type="domain" description="EF-hand 2" evidence="18">
    <location>
        <begin position="102"/>
        <end position="126"/>
    </location>
</feature>
<feature type="domain" description="SAM" evidence="3 18">
    <location>
        <begin position="132"/>
        <end position="200"/>
    </location>
</feature>
<feature type="region of interest" description="SOAR/CAD" evidence="20">
    <location>
        <begin position="344"/>
        <end position="442"/>
    </location>
</feature>
<feature type="region of interest" description="Contributes to fast Ca(2+)-dependent inactivation of CRAC channels" evidence="25">
    <location>
        <begin position="475"/>
        <end position="483"/>
    </location>
</feature>
<feature type="region of interest" description="Disordered" evidence="4">
    <location>
        <begin position="490"/>
        <end position="542"/>
    </location>
</feature>
<feature type="region of interest" description="Disordered" evidence="4">
    <location>
        <begin position="596"/>
        <end position="685"/>
    </location>
</feature>
<feature type="region of interest" description="Required for generation of inwardly rectifying CRAC currents" evidence="20">
    <location>
        <begin position="672"/>
        <end position="685"/>
    </location>
</feature>
<feature type="coiled-coil region" evidence="29 34 35">
    <location>
        <begin position="248"/>
        <end position="442"/>
    </location>
</feature>
<feature type="short sequence motif" description="Microtubule tip localization signal" evidence="24">
    <location>
        <begin position="642"/>
        <end position="645"/>
    </location>
</feature>
<feature type="compositionally biased region" description="Low complexity" evidence="4">
    <location>
        <begin position="490"/>
        <end position="499"/>
    </location>
</feature>
<feature type="compositionally biased region" description="Basic and acidic residues" evidence="4">
    <location>
        <begin position="515"/>
        <end position="532"/>
    </location>
</feature>
<feature type="compositionally biased region" description="Low complexity" evidence="4">
    <location>
        <begin position="608"/>
        <end position="620"/>
    </location>
</feature>
<feature type="compositionally biased region" description="Acidic residues" evidence="4">
    <location>
        <begin position="655"/>
        <end position="666"/>
    </location>
</feature>
<feature type="compositionally biased region" description="Basic residues" evidence="4">
    <location>
        <begin position="670"/>
        <end position="685"/>
    </location>
</feature>
<feature type="binding site" evidence="18 54">
    <location>
        <position position="76"/>
    </location>
    <ligand>
        <name>Ca(2+)</name>
        <dbReference type="ChEBI" id="CHEBI:29108"/>
    </ligand>
</feature>
<feature type="binding site" evidence="18 54">
    <location>
        <position position="78"/>
    </location>
    <ligand>
        <name>Ca(2+)</name>
        <dbReference type="ChEBI" id="CHEBI:29108"/>
    </ligand>
</feature>
<feature type="binding site" evidence="18 54">
    <location>
        <position position="80"/>
    </location>
    <ligand>
        <name>Ca(2+)</name>
        <dbReference type="ChEBI" id="CHEBI:29108"/>
    </ligand>
</feature>
<feature type="binding site" evidence="18 54">
    <location>
        <position position="82"/>
    </location>
    <ligand>
        <name>Ca(2+)</name>
        <dbReference type="ChEBI" id="CHEBI:29108"/>
    </ligand>
</feature>
<feature type="binding site" evidence="18 54">
    <location>
        <position position="87"/>
    </location>
    <ligand>
        <name>Ca(2+)</name>
        <dbReference type="ChEBI" id="CHEBI:29108"/>
    </ligand>
</feature>
<feature type="modified residue" description="Phosphoserine" evidence="58 61">
    <location>
        <position position="257"/>
    </location>
</feature>
<feature type="modified residue" description="Phosphothreonine" evidence="1">
    <location>
        <position position="504"/>
    </location>
</feature>
<feature type="modified residue" description="Phosphoserine" evidence="61 62">
    <location>
        <position position="512"/>
    </location>
</feature>
<feature type="modified residue" description="Phosphothreonine" evidence="62">
    <location>
        <position position="517"/>
    </location>
</feature>
<feature type="modified residue" description="Phosphoserine" evidence="60 61 62">
    <location>
        <position position="519"/>
    </location>
</feature>
<feature type="modified residue" description="Phosphoserine" evidence="61 62">
    <location>
        <position position="521"/>
    </location>
</feature>
<feature type="modified residue" description="Phosphoserine" evidence="62">
    <location>
        <position position="523"/>
    </location>
</feature>
<feature type="modified residue" description="Phosphoserine" evidence="1">
    <location>
        <position position="524"/>
    </location>
</feature>
<feature type="modified residue" description="Phosphoserine" evidence="61 62">
    <location>
        <position position="567"/>
    </location>
</feature>
<feature type="modified residue" description="Phosphoserine" evidence="56 59 61">
    <location>
        <position position="575"/>
    </location>
</feature>
<feature type="modified residue" description="Phosphoserine" evidence="62">
    <location>
        <position position="602"/>
    </location>
</feature>
<feature type="modified residue" description="Phosphoserine" evidence="55 57 61 62">
    <location>
        <position position="608"/>
    </location>
</feature>
<feature type="modified residue" description="Phosphoserine" evidence="61">
    <location>
        <position position="618"/>
    </location>
</feature>
<feature type="modified residue" description="Phosphoserine" evidence="61">
    <location>
        <position position="621"/>
    </location>
</feature>
<feature type="modified residue" description="Phosphoserine" evidence="61">
    <location>
        <position position="628"/>
    </location>
</feature>
<feature type="modified residue" description="Phosphoserine" evidence="57 59 61">
    <location>
        <position position="660"/>
    </location>
</feature>
<feature type="modified residue" description="Phosphothreonine" evidence="59">
    <location>
        <position position="665"/>
    </location>
</feature>
<feature type="modified residue" description="Phosphoserine" evidence="57 59 61">
    <location>
        <position position="668"/>
    </location>
</feature>
<feature type="glycosylation site" description="N-linked (GlcNAc...) asparagine" evidence="7">
    <location>
        <position position="131"/>
    </location>
</feature>
<feature type="glycosylation site" description="N-linked (GlcNAc...) asparagine" evidence="7 8 12 19">
    <location>
        <position position="171"/>
    </location>
</feature>
<feature type="splice variant" id="VSP_055150" description="In isoform 2." evidence="51">
    <original>DLTHSDSESSLHMSDRQRVAPKPPQM</original>
    <variation>GSSLKANRLSSKGFDPFRFGVLPPHE</variation>
    <location>
        <begin position="515"/>
        <end position="540"/>
    </location>
</feature>
<feature type="splice variant" id="VSP_055151" description="In isoform 2." evidence="51">
    <location>
        <begin position="541"/>
        <end position="685"/>
    </location>
</feature>
<feature type="sequence variant" id="VAR_069892" description="In TAM1; myoblasts with the mutation have significantly increased clustering of STIM1, regardless of calcium levels, indicating that calcium sensing in the sarcoplasmic reticulum is impaired; dbSNP:rs397515436." evidence="33">
    <original>H</original>
    <variation>Q</variation>
    <location>
        <position position="72"/>
    </location>
</feature>
<feature type="sequence variant" id="VAR_075619" description="In TAM1; myoblasts with the mutation have significantly increased clustering of STIM1, regardless of calcium levels, indicating that calcium sensing in the sarcoplasmic reticulum is impaired; dbSNP:rs748277951." evidence="40">
    <original>N</original>
    <variation>T</variation>
    <location>
        <position position="80"/>
    </location>
</feature>
<feature type="sequence variant" id="VAR_075620" description="In TAM1; increases store-operated Ca(2+) influx; dbSNP:rs2093352038." evidence="43">
    <original>G</original>
    <variation>D</variation>
    <location>
        <position position="81"/>
    </location>
</feature>
<feature type="sequence variant" id="VAR_069893" description="In TAM1; myoblasts with the mutation have significantly increased clustering of STIM1, regardless of calcium levels, indicating that calcium sensing in the sarcoplasmic reticulum is impaired; dbSNP:rs397514675." evidence="33">
    <original>D</original>
    <variation>G</variation>
    <location>
        <position position="84"/>
    </location>
</feature>
<feature type="sequence variant" id="VAR_075621" description="In TAM1; myoblasts with the mutation have significantly increased clustering of STIM1, regardless of calcium levels, indicating that calcium sensing in the sarcoplasmic reticulum is impaired." evidence="40">
    <original>L</original>
    <variation>V</variation>
    <location>
        <position position="96"/>
    </location>
</feature>
<feature type="sequence variant" id="VAR_075622" description="In TAM1; myoblasts with the mutation have significantly increased clustering of STIM1, regardless of calcium levels, indicating that calcium sensing in the sarcoplasmic reticulum is impaired." evidence="40">
    <original>F</original>
    <variation>I</variation>
    <location>
        <position position="108"/>
    </location>
</feature>
<feature type="sequence variant" id="VAR_075623" description="In TAM1; myoblasts with the mutation have significantly increased clustering of STIM1, regardless of calcium levels, indicating that calcium sensing in the sarcoplasmic reticulum is impaired." evidence="40">
    <original>F</original>
    <variation>L</variation>
    <location>
        <position position="108"/>
    </location>
</feature>
<feature type="sequence variant" id="VAR_069894" description="In TAM1; myoblasts with the mutation have significantly increased clustering of STIM1, regardless of calcium levels, indicating that calcium sensing in the sarcoplasmic reticulum is impaired; dbSNP:rs397514676." evidence="33 40">
    <original>H</original>
    <variation>N</variation>
    <location>
        <position position="109"/>
    </location>
</feature>
<feature type="sequence variant" id="VAR_069895" description="In TAM1; myoblasts with the mutation have significantly increased clustering of STIM1, regardless of calcium levels, indicating that calcium sensing in the sarcoplasmic reticulum is impaired; dbSNP:rs397514677." evidence="33 36">
    <original>H</original>
    <variation>R</variation>
    <location>
        <position position="109"/>
    </location>
</feature>
<feature type="sequence variant" id="VAR_074037" description="In STRMK and TAM1; dbSNP:rs527236030." evidence="36 42">
    <original>I</original>
    <variation>F</variation>
    <location>
        <position position="115"/>
    </location>
</feature>
<feature type="sequence variant" id="VAR_071476" description="In STRMK; autosomal dominant; promotes constitutive activation of the Ca(2+) release-activated Ca(2+) (CRAC) channel; dbSNP:rs483352867." evidence="37 38 42">
    <original>R</original>
    <variation>W</variation>
    <location>
        <position position="304"/>
    </location>
</feature>
<feature type="sequence variant" id="VAR_071477" description="Found in a patient with autosomal recessive hypomaturation enamel malformations, nail dysplasia and frequent throat infections; likely pathogenic; dbSNP:rs1057519505." evidence="39">
    <original>R</original>
    <variation>C</variation>
    <location>
        <position position="426"/>
    </location>
</feature>
<feature type="sequence variant" id="VAR_069896" description="In IMD10; dbSNP:rs397514671." evidence="28">
    <original>R</original>
    <variation>C</variation>
    <location>
        <position position="429"/>
    </location>
</feature>
<feature type="sequence variant" id="VAR_061878" description="In dbSNP:rs35960304.">
    <original>P</original>
    <variation>S</variation>
    <location>
        <position position="538"/>
    </location>
</feature>
<feature type="mutagenesis site" description="Increases Ca(2+) influx even when Ca(2+) stores are not depleted. Promotes constitutive activation of the Ca2+ release-activated Ca2+ (CRAC) channel." evidence="10 16 37 45">
    <original>D</original>
    <variation>A</variation>
    <variation>N</variation>
    <location>
        <position position="76"/>
    </location>
</feature>
<feature type="mutagenesis site" description="Increases Ca(2+) influx even when Ca(2+) stores are not depleted." evidence="16">
    <original>D</original>
    <variation>N</variation>
    <location>
        <position position="78"/>
    </location>
</feature>
<feature type="mutagenesis site" description="Increases Ca(2+) influx through activation of CRAC channels, even when Ca(2+) stores are not depleted." evidence="13 16 18">
    <original>E</original>
    <variation>A</variation>
    <variation>Q</variation>
    <location>
        <position position="87"/>
    </location>
</feature>
<feature type="mutagenesis site" description="Constitutive localization in punctae at the cell membrane and constitutive activation of CRAC channels; when associated with D-110." evidence="18">
    <original>F</original>
    <variation>D</variation>
    <location>
        <position position="108"/>
    </location>
</feature>
<feature type="mutagenesis site" description="Constitutive localization in punctae at the cell membrane and constitutive activation of CRAC channels; when associated with D-108." evidence="18">
    <original>G</original>
    <variation>D</variation>
    <location>
        <position position="110"/>
    </location>
</feature>
<feature type="mutagenesis site" description="Impairs ORAI1 ARC channel currents; when associated with Q-171." evidence="23">
    <original>N</original>
    <variation>Q</variation>
    <location>
        <position position="131"/>
    </location>
</feature>
<feature type="mutagenesis site" description="Impairs ORAI1 ARC channel currents; when associated with Q-131." evidence="23">
    <original>N</original>
    <variation>Q</variation>
    <location>
        <position position="171"/>
    </location>
</feature>
<feature type="mutagenesis site" description="Constitutive localization in punctae at the cell membrane and constitutive activation of CRAC channels." evidence="18">
    <original>L</original>
    <variation>R</variation>
    <location>
        <position position="195"/>
    </location>
</feature>
<feature type="mutagenesis site" description="Promotes constitutive activation of the Ca2+ release-activated Ca2+ (CRAC) channel." evidence="45">
    <original>L</original>
    <variation>G</variation>
    <location>
        <position position="258"/>
    </location>
</feature>
<feature type="mutagenesis site" description="Constitutive activation of CRAC channels." evidence="35">
    <original>EEELE</original>
    <variation>QQQLQ</variation>
    <location>
        <begin position="318"/>
        <end position="322"/>
    </location>
</feature>
<feature type="mutagenesis site" description="Reduces activation of CRAC channels." evidence="35">
    <original>V</original>
    <variation>P</variation>
    <location>
        <position position="324"/>
    </location>
</feature>
<feature type="mutagenesis site" description="Impairs ORAI1 CRAC channel gating; when associated with A-348. Impairs the interaction and clustering with ORAI1 in punctae at the cell membrane; when associated with A-348." evidence="20">
    <original>L</original>
    <variation>A</variation>
    <location>
        <position position="347"/>
    </location>
</feature>
<feature type="mutagenesis site" description="Abolishes colocalization with ORAI1 and activation of CRAC channels." evidence="35">
    <original>L</original>
    <variation>R</variation>
    <location>
        <position position="347"/>
    </location>
</feature>
<feature type="mutagenesis site" description="Impairs ORAI1 CRAC channel gating; when associated with A-347. Impairs the interaction and clustering with ORAI1 in punctae at the cell membrane; when associated with A-347." evidence="20">
    <original>Q</original>
    <variation>A</variation>
    <location>
        <position position="348"/>
    </location>
</feature>
<feature type="mutagenesis site" description="Abolishes colocalization with ORAI1 and activation of CRAC channels." evidence="35">
    <original>L</original>
    <variation>R</variation>
    <location>
        <position position="351"/>
    </location>
</feature>
<feature type="mutagenesis site" description="Abolishes activation of CRAC channels." evidence="35">
    <original>YY</original>
    <variation>KK</variation>
    <location>
        <begin position="361"/>
        <end position="362"/>
    </location>
</feature>
<feature type="mutagenesis site" description="Constitutive activation of CRAC channels." evidence="35">
    <original>A</original>
    <variation>R</variation>
    <location>
        <position position="380"/>
    </location>
</feature>
<feature type="mutagenesis site" description="Abolishes activation of CRAC channels." evidence="35">
    <original>KIKKK</original>
    <variation>EIEEE</variation>
    <location>
        <begin position="382"/>
        <end position="386"/>
    </location>
</feature>
<feature type="mutagenesis site" description="Abolishes activation of CRAC channels." evidence="35">
    <original>I</original>
    <variation>R</variation>
    <location>
        <position position="383"/>
    </location>
</feature>
<feature type="mutagenesis site" description="Decreases fast Ca(2+)-dependent inactivation of ORAI3 channels; when associated with A-476, A-478, A-479." evidence="25">
    <original>D</original>
    <variation>A</variation>
    <location>
        <position position="475"/>
    </location>
</feature>
<feature type="mutagenesis site" description="Decreases fast Ca(2+)-dependent inactivation of ORAI3 channels; when associated with A-475, A-478, A-479." evidence="25">
    <original>D</original>
    <variation>A</variation>
    <location>
        <position position="476"/>
    </location>
</feature>
<feature type="mutagenesis site" description="Decreases fast Ca(2+)-dependent inactivation of ORAI3 channels; when associated with A-475, A-476, A-479." evidence="25">
    <location>
        <position position="478"/>
    </location>
</feature>
<feature type="mutagenesis site" description="Decreases fast Ca(2+)-dependent inactivation of ORAI3 channels; when associated with A-475, A-476, A-478." evidence="25">
    <original>D</original>
    <variation>A</variation>
    <location>
        <position position="479"/>
    </location>
</feature>
<feature type="mutagenesis site" description="Decreases fast Ca(2+)-dependent inactivation of ORAI3 channels; when associated with A-482 and A-483." evidence="25">
    <original>D</original>
    <variation>A</variation>
    <location>
        <position position="481"/>
    </location>
</feature>
<feature type="mutagenesis site" description="Decreases fast Ca(2+)-dependent inactivation of ORAI3 channels; when associated with A-481 and A-483." evidence="25">
    <original>E</original>
    <variation>A</variation>
    <location>
        <position position="482"/>
    </location>
</feature>
<feature type="mutagenesis site" description="Decreases fast Ca(2+)-dependent inactivation of ORAI3 channels; when associated with A-481 and A-482." evidence="25">
    <original>E</original>
    <variation>A</variation>
    <location>
        <position position="483"/>
    </location>
</feature>
<feature type="mutagenesis site" description="Loss of interaction with MAPRE1 and association with the growing microtubule plus ends." evidence="24">
    <original>IP</original>
    <variation>NN</variation>
    <location>
        <begin position="644"/>
        <end position="645"/>
    </location>
</feature>
<feature type="sequence conflict" description="In Ref. 2; AK314928." evidence="53" ref="2">
    <original>E</original>
    <variation>G</variation>
    <location>
        <position position="505"/>
    </location>
</feature>
<feature type="sequence conflict" description="In Ref. 1; AAC51627." evidence="53" ref="1">
    <original>S</original>
    <variation>R</variation>
    <location>
        <position position="556"/>
    </location>
</feature>
<feature type="helix" evidence="63">
    <location>
        <begin position="64"/>
        <end position="73"/>
    </location>
</feature>
<feature type="strand" evidence="63">
    <location>
        <begin position="80"/>
        <end position="83"/>
    </location>
</feature>
<feature type="turn" evidence="63">
    <location>
        <begin position="85"/>
        <end position="90"/>
    </location>
</feature>
<feature type="helix" evidence="63">
    <location>
        <begin position="91"/>
        <end position="95"/>
    </location>
</feature>
<feature type="helix" evidence="63">
    <location>
        <begin position="102"/>
        <end position="108"/>
    </location>
</feature>
<feature type="strand" evidence="63">
    <location>
        <begin position="110"/>
        <end position="112"/>
    </location>
</feature>
<feature type="helix" evidence="63">
    <location>
        <begin position="117"/>
        <end position="126"/>
    </location>
</feature>
<feature type="helix" evidence="63">
    <location>
        <begin position="128"/>
        <end position="131"/>
    </location>
</feature>
<feature type="helix" evidence="63">
    <location>
        <begin position="134"/>
        <end position="145"/>
    </location>
</feature>
<feature type="helix" evidence="63">
    <location>
        <begin position="150"/>
        <end position="157"/>
    </location>
</feature>
<feature type="helix" evidence="63">
    <location>
        <begin position="163"/>
        <end position="167"/>
    </location>
</feature>
<feature type="helix" evidence="63">
    <location>
        <begin position="171"/>
        <end position="174"/>
    </location>
</feature>
<feature type="helix" evidence="63">
    <location>
        <begin position="183"/>
        <end position="199"/>
    </location>
</feature>
<feature type="helix" evidence="66">
    <location>
        <begin position="249"/>
        <end position="271"/>
    </location>
</feature>
<feature type="turn" evidence="66">
    <location>
        <begin position="272"/>
        <end position="275"/>
    </location>
</feature>
<feature type="helix" evidence="66">
    <location>
        <begin position="276"/>
        <end position="334"/>
    </location>
</feature>
<feature type="helix" evidence="64">
    <location>
        <begin position="339"/>
        <end position="341"/>
    </location>
</feature>
<feature type="helix" evidence="65">
    <location>
        <begin position="345"/>
        <end position="391"/>
    </location>
</feature>
<feature type="helix" evidence="65">
    <location>
        <begin position="393"/>
        <end position="397"/>
    </location>
</feature>
<feature type="helix" evidence="65">
    <location>
        <begin position="400"/>
        <end position="404"/>
    </location>
</feature>
<feature type="helix" evidence="65">
    <location>
        <begin position="408"/>
        <end position="437"/>
    </location>
</feature>
<evidence type="ECO:0000250" key="1">
    <source>
        <dbReference type="UniProtKB" id="P70302"/>
    </source>
</evidence>
<evidence type="ECO:0000255" key="2"/>
<evidence type="ECO:0000255" key="3">
    <source>
        <dbReference type="PROSITE-ProRule" id="PRU00184"/>
    </source>
</evidence>
<evidence type="ECO:0000256" key="4">
    <source>
        <dbReference type="SAM" id="MobiDB-lite"/>
    </source>
</evidence>
<evidence type="ECO:0000269" key="5">
    <source>
    </source>
</evidence>
<evidence type="ECO:0000269" key="6">
    <source>
    </source>
</evidence>
<evidence type="ECO:0000269" key="7">
    <source>
    </source>
</evidence>
<evidence type="ECO:0000269" key="8">
    <source>
    </source>
</evidence>
<evidence type="ECO:0000269" key="9">
    <source>
    </source>
</evidence>
<evidence type="ECO:0000269" key="10">
    <source>
    </source>
</evidence>
<evidence type="ECO:0000269" key="11">
    <source>
    </source>
</evidence>
<evidence type="ECO:0000269" key="12">
    <source>
    </source>
</evidence>
<evidence type="ECO:0000269" key="13">
    <source>
    </source>
</evidence>
<evidence type="ECO:0000269" key="14">
    <source>
    </source>
</evidence>
<evidence type="ECO:0000269" key="15">
    <source>
    </source>
</evidence>
<evidence type="ECO:0000269" key="16">
    <source>
    </source>
</evidence>
<evidence type="ECO:0000269" key="17">
    <source>
    </source>
</evidence>
<evidence type="ECO:0000269" key="18">
    <source>
    </source>
</evidence>
<evidence type="ECO:0000269" key="19">
    <source>
    </source>
</evidence>
<evidence type="ECO:0000269" key="20">
    <source>
    </source>
</evidence>
<evidence type="ECO:0000269" key="21">
    <source>
    </source>
</evidence>
<evidence type="ECO:0000269" key="22">
    <source>
    </source>
</evidence>
<evidence type="ECO:0000269" key="23">
    <source>
    </source>
</evidence>
<evidence type="ECO:0000269" key="24">
    <source>
    </source>
</evidence>
<evidence type="ECO:0000269" key="25">
    <source>
    </source>
</evidence>
<evidence type="ECO:0000269" key="26">
    <source>
    </source>
</evidence>
<evidence type="ECO:0000269" key="27">
    <source>
    </source>
</evidence>
<evidence type="ECO:0000269" key="28">
    <source>
    </source>
</evidence>
<evidence type="ECO:0000269" key="29">
    <source>
    </source>
</evidence>
<evidence type="ECO:0000269" key="30">
    <source>
    </source>
</evidence>
<evidence type="ECO:0000269" key="31">
    <source>
    </source>
</evidence>
<evidence type="ECO:0000269" key="32">
    <source>
    </source>
</evidence>
<evidence type="ECO:0000269" key="33">
    <source>
    </source>
</evidence>
<evidence type="ECO:0000269" key="34">
    <source>
    </source>
</evidence>
<evidence type="ECO:0000269" key="35">
    <source>
    </source>
</evidence>
<evidence type="ECO:0000269" key="36">
    <source>
    </source>
</evidence>
<evidence type="ECO:0000269" key="37">
    <source>
    </source>
</evidence>
<evidence type="ECO:0000269" key="38">
    <source>
    </source>
</evidence>
<evidence type="ECO:0000269" key="39">
    <source>
    </source>
</evidence>
<evidence type="ECO:0000269" key="40">
    <source>
    </source>
</evidence>
<evidence type="ECO:0000269" key="41">
    <source>
    </source>
</evidence>
<evidence type="ECO:0000269" key="42">
    <source>
    </source>
</evidence>
<evidence type="ECO:0000269" key="43">
    <source>
    </source>
</evidence>
<evidence type="ECO:0000269" key="44">
    <source>
    </source>
</evidence>
<evidence type="ECO:0000269" key="45">
    <source>
    </source>
</evidence>
<evidence type="ECO:0000269" key="46">
    <source>
    </source>
</evidence>
<evidence type="ECO:0000269" key="47">
    <source>
    </source>
</evidence>
<evidence type="ECO:0000269" key="48">
    <source>
    </source>
</evidence>
<evidence type="ECO:0000269" key="49">
    <source>
    </source>
</evidence>
<evidence type="ECO:0000269" key="50">
    <source>
    </source>
</evidence>
<evidence type="ECO:0000303" key="51">
    <source>
    </source>
</evidence>
<evidence type="ECO:0000303" key="52">
    <source>
    </source>
</evidence>
<evidence type="ECO:0000305" key="53"/>
<evidence type="ECO:0007744" key="54">
    <source>
        <dbReference type="PDB" id="2K60"/>
    </source>
</evidence>
<evidence type="ECO:0007744" key="55">
    <source>
    </source>
</evidence>
<evidence type="ECO:0007744" key="56">
    <source>
    </source>
</evidence>
<evidence type="ECO:0007744" key="57">
    <source>
    </source>
</evidence>
<evidence type="ECO:0007744" key="58">
    <source>
    </source>
</evidence>
<evidence type="ECO:0007744" key="59">
    <source>
    </source>
</evidence>
<evidence type="ECO:0007744" key="60">
    <source>
    </source>
</evidence>
<evidence type="ECO:0007744" key="61">
    <source>
    </source>
</evidence>
<evidence type="ECO:0007744" key="62">
    <source>
    </source>
</evidence>
<evidence type="ECO:0007829" key="63">
    <source>
        <dbReference type="PDB" id="2K60"/>
    </source>
</evidence>
<evidence type="ECO:0007829" key="64">
    <source>
        <dbReference type="PDB" id="2MAK"/>
    </source>
</evidence>
<evidence type="ECO:0007829" key="65">
    <source>
        <dbReference type="PDB" id="3TEQ"/>
    </source>
</evidence>
<evidence type="ECO:0007829" key="66">
    <source>
        <dbReference type="PDB" id="4O9B"/>
    </source>
</evidence>
<keyword id="KW-0002">3D-structure</keyword>
<keyword id="KW-0025">Alternative splicing</keyword>
<keyword id="KW-0106">Calcium</keyword>
<keyword id="KW-0109">Calcium transport</keyword>
<keyword id="KW-1003">Cell membrane</keyword>
<keyword id="KW-0175">Coiled coil</keyword>
<keyword id="KW-0963">Cytoplasm</keyword>
<keyword id="KW-0206">Cytoskeleton</keyword>
<keyword id="KW-0225">Disease variant</keyword>
<keyword id="KW-0256">Endoplasmic reticulum</keyword>
<keyword id="KW-0325">Glycoprotein</keyword>
<keyword id="KW-0406">Ion transport</keyword>
<keyword id="KW-0472">Membrane</keyword>
<keyword id="KW-0479">Metal-binding</keyword>
<keyword id="KW-0493">Microtubule</keyword>
<keyword id="KW-0597">Phosphoprotein</keyword>
<keyword id="KW-1267">Proteomics identification</keyword>
<keyword id="KW-1185">Reference proteome</keyword>
<keyword id="KW-0703">Sarcoplasmic reticulum</keyword>
<keyword id="KW-0732">Signal</keyword>
<keyword id="KW-0812">Transmembrane</keyword>
<keyword id="KW-1133">Transmembrane helix</keyword>
<keyword id="KW-0813">Transport</keyword>
<proteinExistence type="evidence at protein level"/>
<protein>
    <recommendedName>
        <fullName>Stromal interaction molecule 1</fullName>
    </recommendedName>
</protein>
<reference key="1">
    <citation type="journal article" date="1996" name="Genomics">
        <title>Molecular cloning of a novel human gene (D11S4896E) at chromosomal region 11p15.5.</title>
        <authorList>
            <person name="Parker N.J."/>
            <person name="Begley C.G."/>
            <person name="Smith P.J."/>
            <person name="Fox R.M."/>
        </authorList>
    </citation>
    <scope>NUCLEOTIDE SEQUENCE [MRNA] (ISOFORM 1)</scope>
    <source>
        <tissue>Fetal liver</tissue>
        <tissue>Placenta</tissue>
    </source>
</reference>
<reference key="2">
    <citation type="journal article" date="2004" name="Nat. Genet.">
        <title>Complete sequencing and characterization of 21,243 full-length human cDNAs.</title>
        <authorList>
            <person name="Ota T."/>
            <person name="Suzuki Y."/>
            <person name="Nishikawa T."/>
            <person name="Otsuki T."/>
            <person name="Sugiyama T."/>
            <person name="Irie R."/>
            <person name="Wakamatsu A."/>
            <person name="Hayashi K."/>
            <person name="Sato H."/>
            <person name="Nagai K."/>
            <person name="Kimura K."/>
            <person name="Makita H."/>
            <person name="Sekine M."/>
            <person name="Obayashi M."/>
            <person name="Nishi T."/>
            <person name="Shibahara T."/>
            <person name="Tanaka T."/>
            <person name="Ishii S."/>
            <person name="Yamamoto J."/>
            <person name="Saito K."/>
            <person name="Kawai Y."/>
            <person name="Isono Y."/>
            <person name="Nakamura Y."/>
            <person name="Nagahari K."/>
            <person name="Murakami K."/>
            <person name="Yasuda T."/>
            <person name="Iwayanagi T."/>
            <person name="Wagatsuma M."/>
            <person name="Shiratori A."/>
            <person name="Sudo H."/>
            <person name="Hosoiri T."/>
            <person name="Kaku Y."/>
            <person name="Kodaira H."/>
            <person name="Kondo H."/>
            <person name="Sugawara M."/>
            <person name="Takahashi M."/>
            <person name="Kanda K."/>
            <person name="Yokoi T."/>
            <person name="Furuya T."/>
            <person name="Kikkawa E."/>
            <person name="Omura Y."/>
            <person name="Abe K."/>
            <person name="Kamihara K."/>
            <person name="Katsuta N."/>
            <person name="Sato K."/>
            <person name="Tanikawa M."/>
            <person name="Yamazaki M."/>
            <person name="Ninomiya K."/>
            <person name="Ishibashi T."/>
            <person name="Yamashita H."/>
            <person name="Murakawa K."/>
            <person name="Fujimori K."/>
            <person name="Tanai H."/>
            <person name="Kimata M."/>
            <person name="Watanabe M."/>
            <person name="Hiraoka S."/>
            <person name="Chiba Y."/>
            <person name="Ishida S."/>
            <person name="Ono Y."/>
            <person name="Takiguchi S."/>
            <person name="Watanabe S."/>
            <person name="Yosida M."/>
            <person name="Hotuta T."/>
            <person name="Kusano J."/>
            <person name="Kanehori K."/>
            <person name="Takahashi-Fujii A."/>
            <person name="Hara H."/>
            <person name="Tanase T.-O."/>
            <person name="Nomura Y."/>
            <person name="Togiya S."/>
            <person name="Komai F."/>
            <person name="Hara R."/>
            <person name="Takeuchi K."/>
            <person name="Arita M."/>
            <person name="Imose N."/>
            <person name="Musashino K."/>
            <person name="Yuuki H."/>
            <person name="Oshima A."/>
            <person name="Sasaki N."/>
            <person name="Aotsuka S."/>
            <person name="Yoshikawa Y."/>
            <person name="Matsunawa H."/>
            <person name="Ichihara T."/>
            <person name="Shiohata N."/>
            <person name="Sano S."/>
            <person name="Moriya S."/>
            <person name="Momiyama H."/>
            <person name="Satoh N."/>
            <person name="Takami S."/>
            <person name="Terashima Y."/>
            <person name="Suzuki O."/>
            <person name="Nakagawa S."/>
            <person name="Senoh A."/>
            <person name="Mizoguchi H."/>
            <person name="Goto Y."/>
            <person name="Shimizu F."/>
            <person name="Wakebe H."/>
            <person name="Hishigaki H."/>
            <person name="Watanabe T."/>
            <person name="Sugiyama A."/>
            <person name="Takemoto M."/>
            <person name="Kawakami B."/>
            <person name="Yamazaki M."/>
            <person name="Watanabe K."/>
            <person name="Kumagai A."/>
            <person name="Itakura S."/>
            <person name="Fukuzumi Y."/>
            <person name="Fujimori Y."/>
            <person name="Komiyama M."/>
            <person name="Tashiro H."/>
            <person name="Tanigami A."/>
            <person name="Fujiwara T."/>
            <person name="Ono T."/>
            <person name="Yamada K."/>
            <person name="Fujii Y."/>
            <person name="Ozaki K."/>
            <person name="Hirao M."/>
            <person name="Ohmori Y."/>
            <person name="Kawabata A."/>
            <person name="Hikiji T."/>
            <person name="Kobatake N."/>
            <person name="Inagaki H."/>
            <person name="Ikema Y."/>
            <person name="Okamoto S."/>
            <person name="Okitani R."/>
            <person name="Kawakami T."/>
            <person name="Noguchi S."/>
            <person name="Itoh T."/>
            <person name="Shigeta K."/>
            <person name="Senba T."/>
            <person name="Matsumura K."/>
            <person name="Nakajima Y."/>
            <person name="Mizuno T."/>
            <person name="Morinaga M."/>
            <person name="Sasaki M."/>
            <person name="Togashi T."/>
            <person name="Oyama M."/>
            <person name="Hata H."/>
            <person name="Watanabe M."/>
            <person name="Komatsu T."/>
            <person name="Mizushima-Sugano J."/>
            <person name="Satoh T."/>
            <person name="Shirai Y."/>
            <person name="Takahashi Y."/>
            <person name="Nakagawa K."/>
            <person name="Okumura K."/>
            <person name="Nagase T."/>
            <person name="Nomura N."/>
            <person name="Kikuchi H."/>
            <person name="Masuho Y."/>
            <person name="Yamashita R."/>
            <person name="Nakai K."/>
            <person name="Yada T."/>
            <person name="Nakamura Y."/>
            <person name="Ohara O."/>
            <person name="Isogai T."/>
            <person name="Sugano S."/>
        </authorList>
    </citation>
    <scope>NUCLEOTIDE SEQUENCE [LARGE SCALE MRNA] (ISOFORM 2)</scope>
</reference>
<reference key="3">
    <citation type="journal article" date="2006" name="Nature">
        <title>Human chromosome 11 DNA sequence and analysis including novel gene identification.</title>
        <authorList>
            <person name="Taylor T.D."/>
            <person name="Noguchi H."/>
            <person name="Totoki Y."/>
            <person name="Toyoda A."/>
            <person name="Kuroki Y."/>
            <person name="Dewar K."/>
            <person name="Lloyd C."/>
            <person name="Itoh T."/>
            <person name="Takeda T."/>
            <person name="Kim D.-W."/>
            <person name="She X."/>
            <person name="Barlow K.F."/>
            <person name="Bloom T."/>
            <person name="Bruford E."/>
            <person name="Chang J.L."/>
            <person name="Cuomo C.A."/>
            <person name="Eichler E."/>
            <person name="FitzGerald M.G."/>
            <person name="Jaffe D.B."/>
            <person name="LaButti K."/>
            <person name="Nicol R."/>
            <person name="Park H.-S."/>
            <person name="Seaman C."/>
            <person name="Sougnez C."/>
            <person name="Yang X."/>
            <person name="Zimmer A.R."/>
            <person name="Zody M.C."/>
            <person name="Birren B.W."/>
            <person name="Nusbaum C."/>
            <person name="Fujiyama A."/>
            <person name="Hattori M."/>
            <person name="Rogers J."/>
            <person name="Lander E.S."/>
            <person name="Sakaki Y."/>
        </authorList>
    </citation>
    <scope>NUCLEOTIDE SEQUENCE [LARGE SCALE GENOMIC DNA]</scope>
</reference>
<reference key="4">
    <citation type="submission" date="2005-07" db="EMBL/GenBank/DDBJ databases">
        <authorList>
            <person name="Mural R.J."/>
            <person name="Istrail S."/>
            <person name="Sutton G.G."/>
            <person name="Florea L."/>
            <person name="Halpern A.L."/>
            <person name="Mobarry C.M."/>
            <person name="Lippert R."/>
            <person name="Walenz B."/>
            <person name="Shatkay H."/>
            <person name="Dew I."/>
            <person name="Miller J.R."/>
            <person name="Flanigan M.J."/>
            <person name="Edwards N.J."/>
            <person name="Bolanos R."/>
            <person name="Fasulo D."/>
            <person name="Halldorsson B.V."/>
            <person name="Hannenhalli S."/>
            <person name="Turner R."/>
            <person name="Yooseph S."/>
            <person name="Lu F."/>
            <person name="Nusskern D.R."/>
            <person name="Shue B.C."/>
            <person name="Zheng X.H."/>
            <person name="Zhong F."/>
            <person name="Delcher A.L."/>
            <person name="Huson D.H."/>
            <person name="Kravitz S.A."/>
            <person name="Mouchard L."/>
            <person name="Reinert K."/>
            <person name="Remington K.A."/>
            <person name="Clark A.G."/>
            <person name="Waterman M.S."/>
            <person name="Eichler E.E."/>
            <person name="Adams M.D."/>
            <person name="Hunkapiller M.W."/>
            <person name="Myers E.W."/>
            <person name="Venter J.C."/>
        </authorList>
    </citation>
    <scope>NUCLEOTIDE SEQUENCE [LARGE SCALE GENOMIC DNA]</scope>
</reference>
<reference key="5">
    <citation type="journal article" date="2004" name="Genome Res.">
        <title>The status, quality, and expansion of the NIH full-length cDNA project: the Mammalian Gene Collection (MGC).</title>
        <authorList>
            <consortium name="The MGC Project Team"/>
        </authorList>
    </citation>
    <scope>NUCLEOTIDE SEQUENCE [LARGE SCALE MRNA] (ISOFORM 1)</scope>
    <source>
        <tissue>Pancreas</tissue>
    </source>
</reference>
<reference key="6">
    <citation type="journal article" date="1997" name="Cancer Res.">
        <title>GOK: a gene at 11p15 involved in rhabdomyosarcoma and rhabdoid tumor development.</title>
        <authorList>
            <person name="Sabbioni S."/>
            <person name="Barbanti-Brodano G."/>
            <person name="Croce C.M."/>
            <person name="Negrini M."/>
        </authorList>
    </citation>
    <scope>POSSIBLE ROLE IN CANCER DEVELOPMENT</scope>
</reference>
<reference key="7">
    <citation type="journal article" date="2000" name="Biochim. Biophys. Acta">
        <title>STIM1: a novel phosphoprotein located at the cell surface.</title>
        <authorList>
            <person name="Manji S.S."/>
            <person name="Parker N.J."/>
            <person name="Williams R.T."/>
            <person name="van Stekelenburg L."/>
            <person name="Pearson R.B."/>
            <person name="Dziadek M."/>
            <person name="Smith P.J."/>
        </authorList>
    </citation>
    <scope>SUBCELLULAR LOCATION</scope>
    <scope>TISSUE SPECIFICITY</scope>
    <scope>GLYCOSYLATION</scope>
    <scope>PHOSPHORYLATION</scope>
</reference>
<reference key="8">
    <citation type="journal article" date="2001" name="Biochem. J.">
        <title>Identification and characterization of the STIM (stromal interaction molecule) gene family: coding for a novel class of transmembrane proteins.</title>
        <authorList>
            <person name="Williams R.T."/>
            <person name="Manji S.S.M."/>
            <person name="Parker N.J."/>
            <person name="Hancock M.S."/>
            <person name="van Stekelenburg L."/>
            <person name="Eid J.-P."/>
            <person name="Senior P.V."/>
            <person name="Kazenwadel J.S."/>
            <person name="Shandala T."/>
            <person name="Saint R."/>
            <person name="Smith P.J."/>
            <person name="Dziadek M.A."/>
        </authorList>
    </citation>
    <scope>SUBUNIT</scope>
    <scope>TISSUE SPECIFICITY</scope>
</reference>
<reference key="9">
    <citation type="journal article" date="2002" name="Biochim. Biophys. Acta">
        <title>Stromal interaction molecule 1 (STIM1), a transmembrane protein with growth suppressor activity, contains an extracellular SAM domain modified by N-linked glycosylation.</title>
        <authorList>
            <person name="Williams R.T."/>
            <person name="Senior P.V."/>
            <person name="van Stekelenburg L."/>
            <person name="Layton J.E."/>
            <person name="Smith P.J."/>
            <person name="Dziadek M.A."/>
        </authorList>
    </citation>
    <scope>SUBUNIT</scope>
    <scope>GLYCOSYLATION AT ASN-131 AND ASN-171</scope>
</reference>
<reference key="10">
    <citation type="journal article" date="2006" name="Cell">
        <title>Global, in vivo, and site-specific phosphorylation dynamics in signaling networks.</title>
        <authorList>
            <person name="Olsen J.V."/>
            <person name="Blagoev B."/>
            <person name="Gnad F."/>
            <person name="Macek B."/>
            <person name="Kumar C."/>
            <person name="Mortensen P."/>
            <person name="Mann M."/>
        </authorList>
    </citation>
    <scope>PHOSPHORYLATION [LARGE SCALE ANALYSIS] AT SER-608</scope>
    <scope>IDENTIFICATION BY MASS SPECTROMETRY [LARGE SCALE ANALYSIS]</scope>
    <source>
        <tissue>Cervix carcinoma</tissue>
    </source>
</reference>
<reference key="11">
    <citation type="journal article" date="2008" name="J. Proteome Res.">
        <title>Phosphorylation analysis of primary human T lymphocytes using sequential IMAC and titanium oxide enrichment.</title>
        <authorList>
            <person name="Carrascal M."/>
            <person name="Ovelleiro D."/>
            <person name="Casas V."/>
            <person name="Gay M."/>
            <person name="Abian J."/>
        </authorList>
    </citation>
    <scope>PHOSPHORYLATION [LARGE SCALE ANALYSIS] AT SER-257</scope>
    <scope>IDENTIFICATION BY MASS SPECTROMETRY [LARGE SCALE ANALYSIS]</scope>
    <source>
        <tissue>T-cell</tissue>
    </source>
</reference>
<reference key="12">
    <citation type="journal article" date="2008" name="J. Proteome Res.">
        <title>Phosphoproteome of resting human platelets.</title>
        <authorList>
            <person name="Zahedi R.P."/>
            <person name="Lewandrowski U."/>
            <person name="Wiesner J."/>
            <person name="Wortelkamp S."/>
            <person name="Moebius J."/>
            <person name="Schuetz C."/>
            <person name="Walter U."/>
            <person name="Gambaryan S."/>
            <person name="Sickmann A."/>
        </authorList>
    </citation>
    <scope>PHOSPHORYLATION [LARGE SCALE ANALYSIS] AT SER-575</scope>
    <scope>IDENTIFICATION BY MASS SPECTROMETRY [LARGE SCALE ANALYSIS]</scope>
    <source>
        <tissue>Platelet</tissue>
    </source>
</reference>
<reference key="13">
    <citation type="journal article" date="2008" name="Proc. Natl. Acad. Sci. U.S.A.">
        <title>A quantitative atlas of mitotic phosphorylation.</title>
        <authorList>
            <person name="Dephoure N."/>
            <person name="Zhou C."/>
            <person name="Villen J."/>
            <person name="Beausoleil S.A."/>
            <person name="Bakalarski C.E."/>
            <person name="Elledge S.J."/>
            <person name="Gygi S.P."/>
        </authorList>
    </citation>
    <scope>PHOSPHORYLATION [LARGE SCALE ANALYSIS] AT SER-608; SER-660 AND SER-668</scope>
    <scope>IDENTIFICATION BY MASS SPECTROMETRY [LARGE SCALE ANALYSIS]</scope>
    <source>
        <tissue>Cervix carcinoma</tissue>
    </source>
</reference>
<reference key="14">
    <citation type="journal article" date="2009" name="Cell">
        <title>STIM1 clusters and activates CRAC channels via direct binding of a cytosolic domain to Orai1.</title>
        <authorList>
            <person name="Park C.Y."/>
            <person name="Hoover P.J."/>
            <person name="Mullins F.M."/>
            <person name="Bachhawat P."/>
            <person name="Covington E.D."/>
            <person name="Raunser S."/>
            <person name="Walz T."/>
            <person name="Garcia K.C."/>
            <person name="Dolmetsch R.E."/>
            <person name="Lewis R.S."/>
        </authorList>
    </citation>
    <scope>FUNCTION</scope>
    <scope>INTERACTION WITH ORAI1</scope>
    <scope>SUBCELLULAR LOCATION</scope>
    <scope>SUBUNIT</scope>
</reference>
<reference key="15">
    <citation type="journal article" date="2009" name="J. Physiol. (Lond.)">
        <title>The molecular architecture of the arachidonate-regulated Ca2+-selective ARC channel is a pentameric assembly of Orai1 and Orai3 subunits.</title>
        <authorList>
            <person name="Mignen O."/>
            <person name="Thompson J.L."/>
            <person name="Shuttleworth T.J."/>
        </authorList>
    </citation>
    <scope>FUNCTION</scope>
    <scope>MUTAGENESIS OF ASN-131 AND ASN-171</scope>
</reference>
<reference key="16">
    <citation type="journal article" date="2009" name="Nat. Cell Biol.">
        <title>SOAR and the polybasic STIM1 domains gate and regulate Orai channels.</title>
        <authorList>
            <person name="Yuan J.P."/>
            <person name="Zeng W."/>
            <person name="Dorwart M.R."/>
            <person name="Choi Y.J."/>
            <person name="Worley P.F."/>
            <person name="Muallem S."/>
        </authorList>
    </citation>
    <scope>FUNCTION</scope>
    <scope>INTERACTION WITH ORAI1</scope>
    <scope>DOMAIN</scope>
    <scope>SUBCELLULAR LOCATION</scope>
    <scope>MUTAGENESIS OF LEU-347 AND GLN-348</scope>
</reference>
<reference key="17">
    <citation type="journal article" date="2009" name="Proc. Natl. Acad. Sci. U.S.A.">
        <title>Molecular determinants of fast Ca2+-dependent inactivation and gating of the Orai channels.</title>
        <authorList>
            <person name="Lee K.P."/>
            <person name="Yuan J.P."/>
            <person name="Zeng W."/>
            <person name="So I."/>
            <person name="Worley P.F."/>
            <person name="Muallem S."/>
        </authorList>
    </citation>
    <scope>FUNCTION</scope>
    <scope>SUBCELLULAR LOCATION</scope>
    <scope>INTERACTION WITH ORAI1; ORAI2 AND ORAI3</scope>
    <scope>REGION</scope>
    <scope>MUTAGENESIS OF ASP-475; ASP-476; ASP-478; ASP-479; ASP-481; GLU-482 AND GLU-483</scope>
</reference>
<reference key="18">
    <citation type="journal article" date="2009" name="Sci. Signal.">
        <title>Quantitative phosphoproteomic analysis of T cell receptor signaling reveals system-wide modulation of protein-protein interactions.</title>
        <authorList>
            <person name="Mayya V."/>
            <person name="Lundgren D.H."/>
            <person name="Hwang S.-I."/>
            <person name="Rezaul K."/>
            <person name="Wu L."/>
            <person name="Eng J.K."/>
            <person name="Rodionov V."/>
            <person name="Han D.K."/>
        </authorList>
    </citation>
    <scope>PHOSPHORYLATION [LARGE SCALE ANALYSIS] AT SER-575; SER-660; THR-665 AND SER-668</scope>
    <scope>IDENTIFICATION BY MASS SPECTROMETRY [LARGE SCALE ANALYSIS]</scope>
    <source>
        <tissue>Leukemic T-cell</tissue>
    </source>
</reference>
<reference key="19">
    <citation type="journal article" date="2010" name="Sci. Signal.">
        <title>Quantitative phosphoproteomics reveals widespread full phosphorylation site occupancy during mitosis.</title>
        <authorList>
            <person name="Olsen J.V."/>
            <person name="Vermeulen M."/>
            <person name="Santamaria A."/>
            <person name="Kumar C."/>
            <person name="Miller M.L."/>
            <person name="Jensen L.J."/>
            <person name="Gnad F."/>
            <person name="Cox J."/>
            <person name="Jensen T.S."/>
            <person name="Nigg E.A."/>
            <person name="Brunak S."/>
            <person name="Mann M."/>
        </authorList>
    </citation>
    <scope>PHOSPHORYLATION [LARGE SCALE ANALYSIS] AT SER-519</scope>
    <scope>IDENTIFICATION BY MASS SPECTROMETRY [LARGE SCALE ANALYSIS]</scope>
    <source>
        <tissue>Cervix carcinoma</tissue>
    </source>
</reference>
<reference key="20">
    <citation type="journal article" date="2011" name="BMC Syst. Biol.">
        <title>Initial characterization of the human central proteome.</title>
        <authorList>
            <person name="Burkard T.R."/>
            <person name="Planyavsky M."/>
            <person name="Kaupe I."/>
            <person name="Breitwieser F.P."/>
            <person name="Buerckstuemmer T."/>
            <person name="Bennett K.L."/>
            <person name="Superti-Furga G."/>
            <person name="Colinge J."/>
        </authorList>
    </citation>
    <scope>IDENTIFICATION BY MASS SPECTROMETRY [LARGE SCALE ANALYSIS]</scope>
</reference>
<reference key="21">
    <citation type="journal article" date="2012" name="Proc. Natl. Acad. Sci. U.S.A.">
        <title>Junctate is a Ca2+-sensing structural component of Orai1 and stromal interaction molecule 1 (STIM1).</title>
        <authorList>
            <person name="Srikanth S."/>
            <person name="Jew M."/>
            <person name="Kim K.D."/>
            <person name="Yee M.K."/>
            <person name="Abramson J."/>
            <person name="Gwack Y."/>
        </authorList>
    </citation>
    <scope>INTERACTION WITH ASPH</scope>
</reference>
<reference key="22">
    <citation type="journal article" date="2012" name="Sci. Signal.">
        <title>Direct binding between Orai1 and AC8 mediates dynamic interplay between Ca2+ and cAMP signaling.</title>
        <authorList>
            <person name="Willoughby D."/>
            <person name="Everett K.L."/>
            <person name="Halls M.L."/>
            <person name="Pacheco J."/>
            <person name="Skroblin P."/>
            <person name="Vaca L."/>
            <person name="Klussmann E."/>
            <person name="Cooper D.M."/>
        </authorList>
    </citation>
    <scope>INTERACTION WITH ADCY8</scope>
</reference>
<reference key="23">
    <citation type="journal article" date="2003" name="Nat. Biotechnol.">
        <title>Identification and quantification of N-linked glycoproteins using hydrazide chemistry, stable isotope labeling and mass spectrometry.</title>
        <authorList>
            <person name="Zhang H."/>
            <person name="Li X.-J."/>
            <person name="Martin D.B."/>
            <person name="Aebersold R."/>
        </authorList>
    </citation>
    <scope>GLYCOSYLATION AT ASN-171</scope>
</reference>
<reference key="24">
    <citation type="journal article" date="2005" name="Curr. Biol.">
        <title>STIM is a Ca2+ sensor essential for Ca2+-store-depletion-triggered Ca2+ influx.</title>
        <authorList>
            <person name="Liou J."/>
            <person name="Kim M.L."/>
            <person name="Heo W.D."/>
            <person name="Jones J.T."/>
            <person name="Myers J.W."/>
            <person name="Ferrell J.E. Jr."/>
            <person name="Meyer T."/>
        </authorList>
    </citation>
    <scope>FUNCTION</scope>
    <scope>SUBCELLULAR LOCATION</scope>
    <scope>MUTAGENESIS OF ASP-76</scope>
</reference>
<reference key="25">
    <citation type="journal article" date="2005" name="J. Cell Biol.">
        <title>STIM1, an essential and conserved component of store-operated Ca2+ channel function.</title>
        <authorList>
            <person name="Roos J."/>
            <person name="DiGregorio P.J."/>
            <person name="Yeromin A.V."/>
            <person name="Ohlsen K."/>
            <person name="Lioudyno M."/>
            <person name="Zhang S."/>
            <person name="Safrina O."/>
            <person name="Kozak J.A."/>
            <person name="Wagner S.L."/>
            <person name="Cahalan M.D."/>
            <person name="Velicelebi G."/>
            <person name="Stauderman K.A."/>
        </authorList>
    </citation>
    <scope>FUNCTION</scope>
</reference>
<reference key="26">
    <citation type="journal article" date="2005" name="Nature">
        <title>STIM1 is a Ca2+ sensor that activates CRAC channels and migrates from the Ca2+ store to the plasma membrane.</title>
        <authorList>
            <person name="Zhang S.L."/>
            <person name="Yu Y."/>
            <person name="Roos J."/>
            <person name="Kozak J.A."/>
            <person name="Deerinck T.J."/>
            <person name="Ellisman M.H."/>
            <person name="Stauderman K.A."/>
            <person name="Cahalan M.D."/>
        </authorList>
    </citation>
    <scope>FUNCTION</scope>
    <scope>SUBCELLULAR LOCATION</scope>
</reference>
<reference key="27">
    <citation type="journal article" date="2006" name="J. Biol. Chem.">
        <title>Large store-operated calcium selective currents due to co-expression of Orai1 or Orai2 with the intracellular calcium sensor, Stim1.</title>
        <authorList>
            <person name="Mercer J.C."/>
            <person name="Dehaven W.I."/>
            <person name="Smyth J.T."/>
            <person name="Wedel B."/>
            <person name="Boyles R.R."/>
            <person name="Bird G.S."/>
            <person name="Putney J.W. Jr."/>
        </authorList>
    </citation>
    <scope>FUNCTION</scope>
    <scope>MUTAGENESIS OF ASP-76; ASP-78 AND GLU-87</scope>
</reference>
<reference key="28">
    <citation type="journal article" date="2006" name="J. Biol. Chem.">
        <title>Orai1 and STIM reconstitute store-operated calcium channel function.</title>
        <authorList>
            <person name="Soboloff J."/>
            <person name="Spassova M.A."/>
            <person name="Tang X.D."/>
            <person name="Hewavitharana T."/>
            <person name="Xu W."/>
            <person name="Gill D.L."/>
        </authorList>
    </citation>
    <scope>FUNCTION</scope>
</reference>
<reference key="29">
    <citation type="journal article" date="2006" name="Mol. Cell. Proteomics">
        <title>Elucidation of N-glycosylation sites on human platelet proteins: a glycoproteomic approach.</title>
        <authorList>
            <person name="Lewandrowski U."/>
            <person name="Moebius J."/>
            <person name="Walter U."/>
            <person name="Sickmann A."/>
        </authorList>
    </citation>
    <scope>GLYCOSYLATION [LARGE SCALE ANALYSIS] AT ASN-171</scope>
    <source>
        <tissue>Platelet</tissue>
    </source>
</reference>
<reference key="30">
    <citation type="journal article" date="2006" name="Nat. Cell Biol.">
        <title>Amplification of CRAC current by STIM1 and CRACM1 (Orai1).</title>
        <authorList>
            <person name="Peinelt C."/>
            <person name="Vig M."/>
            <person name="Koomoa D.L."/>
            <person name="Beck A."/>
            <person name="Nadler M.J.S."/>
            <person name="Koblan-Huberson M."/>
            <person name="Lis A."/>
            <person name="Fleig A."/>
            <person name="Penner R."/>
            <person name="Kinet J.-P."/>
        </authorList>
    </citation>
    <scope>FUNCTION</scope>
</reference>
<reference key="31">
    <citation type="journal article" date="2006" name="Proc. Natl. Acad. Sci. U.S.A.">
        <title>STIM1 has a plasma membrane role in the activation of store-operated Ca(2+) channels.</title>
        <authorList>
            <person name="Spassova M.A."/>
            <person name="Soboloff J."/>
            <person name="He L.-P."/>
            <person name="Xu W."/>
            <person name="Dziadek M.A."/>
            <person name="Gill D.L."/>
        </authorList>
    </citation>
    <scope>FUNCTION</scope>
    <scope>MUTAGENESIS OF GLU-87</scope>
</reference>
<reference key="32">
    <citation type="journal article" date="2008" name="FASEB J.">
        <title>STIM2 protein mediates distinct store-dependent and store-independent modes of CRAC channel activation.</title>
        <authorList>
            <person name="Parvez S."/>
            <person name="Beck A."/>
            <person name="Peinelt C."/>
            <person name="Soboloff J."/>
            <person name="Lis A."/>
            <person name="Monteilh-Zoller M."/>
            <person name="Gill D.L."/>
            <person name="Fleig A."/>
            <person name="Penner R."/>
        </authorList>
    </citation>
    <scope>INTERACTION WITH ORAI1</scope>
</reference>
<reference key="33">
    <citation type="journal article" date="2009" name="Cell">
        <title>An EB1-binding motif acts as a microtubule tip localization signal.</title>
        <authorList>
            <person name="Honnappa S."/>
            <person name="Gouveia S.M."/>
            <person name="Weisbrich A."/>
            <person name="Damberger F.F."/>
            <person name="Bhavesh N.S."/>
            <person name="Jawhari H."/>
            <person name="Grigoriev I."/>
            <person name="van Rijssel F.J."/>
            <person name="Buey R.M."/>
            <person name="Lawera A."/>
            <person name="Jelesarov I."/>
            <person name="Winkler F.K."/>
            <person name="Wuthrich K."/>
            <person name="Akhmanova A."/>
            <person name="Steinmetz M.O."/>
        </authorList>
    </citation>
    <scope>INTERACTION WITH MAPRE1</scope>
    <scope>SUBCELLULAR LOCATION</scope>
    <scope>DOMAIN MICROTUBULE TIP LOCALIZATION SIGNAL</scope>
    <scope>MUTAGENESIS OF 644-ILE-PRO-645</scope>
</reference>
<reference key="34">
    <citation type="journal article" date="2009" name="J. Proteome Res.">
        <title>Glycoproteomics analysis of human liver tissue by combination of multiple enzyme digestion and hydrazide chemistry.</title>
        <authorList>
            <person name="Chen R."/>
            <person name="Jiang X."/>
            <person name="Sun D."/>
            <person name="Han G."/>
            <person name="Wang F."/>
            <person name="Ye M."/>
            <person name="Wang L."/>
            <person name="Zou H."/>
        </authorList>
    </citation>
    <scope>GLYCOSYLATION [LARGE SCALE ANALYSIS] AT ASN-171</scope>
    <source>
        <tissue>Liver</tissue>
    </source>
</reference>
<reference key="35">
    <citation type="journal article" date="2009" name="N. Engl. J. Med.">
        <title>STIM1 mutation associated with a syndrome of immunodeficiency and autoimmunity.</title>
        <authorList>
            <person name="Picard C."/>
            <person name="McCarl C.A."/>
            <person name="Papolos A."/>
            <person name="Khalil S."/>
            <person name="Luthy K."/>
            <person name="Hivroz C."/>
            <person name="LeDeist F."/>
            <person name="Rieux-Laucat F."/>
            <person name="Rechavi G."/>
            <person name="Rao A."/>
            <person name="Fischer A."/>
            <person name="Feske S."/>
        </authorList>
    </citation>
    <scope>INVOLVEMENT IN IMD10</scope>
</reference>
<reference key="36">
    <citation type="journal article" date="2010" name="Nat. Cell Biol.">
        <title>A novel EF-hand protein, CRACR2A, is a cytosolic Ca2+ sensor that stabilizes CRAC channels in T cells.</title>
        <authorList>
            <person name="Srikanth S."/>
            <person name="Jung H.J."/>
            <person name="Kim K.D."/>
            <person name="Souda P."/>
            <person name="Whitelegge J."/>
            <person name="Gwack Y."/>
        </authorList>
    </citation>
    <scope>INTERACTION WITH CRACR2A</scope>
</reference>
<reference key="37">
    <citation type="journal article" date="2011" name="Proc. Natl. Acad. Sci. U.S.A.">
        <title>POST, partner of stromal interaction molecule 1 (STIM1), targets STIM1 to multiple transporters.</title>
        <authorList>
            <person name="Krapivinsky G."/>
            <person name="Krapivinsky L."/>
            <person name="Stotz S.C."/>
            <person name="Manasian Y."/>
            <person name="Clapham D.E."/>
        </authorList>
    </citation>
    <scope>INTERACTION WITH ATP1A1; ATP2A2; ATP2B1; ATP2B4; KPNB1; SLC35G1 AND XPO1</scope>
</reference>
<reference key="38">
    <citation type="journal article" date="2012" name="Cell">
        <title>SARAF inactivates the store operated calcium entry machinery to prevent excess calcium refilling.</title>
        <authorList>
            <person name="Palty R."/>
            <person name="Raveh A."/>
            <person name="Kaminsky I."/>
            <person name="Meller R."/>
            <person name="Reuveny E."/>
        </authorList>
    </citation>
    <scope>FUNCTION</scope>
    <scope>INTERACTION WITH SARAF</scope>
</reference>
<reference key="39">
    <citation type="journal article" date="2013" name="J. Proteome Res.">
        <title>Toward a comprehensive characterization of a human cancer cell phosphoproteome.</title>
        <authorList>
            <person name="Zhou H."/>
            <person name="Di Palma S."/>
            <person name="Preisinger C."/>
            <person name="Peng M."/>
            <person name="Polat A.N."/>
            <person name="Heck A.J."/>
            <person name="Mohammed S."/>
        </authorList>
    </citation>
    <scope>PHOSPHORYLATION [LARGE SCALE ANALYSIS] AT SER-257; SER-512; SER-519; SER-521; SER-567; SER-575; SER-608; SER-618; SER-621; SER-628; SER-660 AND SER-668</scope>
    <scope>IDENTIFICATION BY MASS SPECTROMETRY [LARGE SCALE ANALYSIS]</scope>
    <source>
        <tissue>Cervix carcinoma</tissue>
        <tissue>Erythroleukemia</tissue>
    </source>
</reference>
<reference key="40">
    <citation type="journal article" date="2014" name="Hum. Mutat.">
        <title>A dominant STIM1 mutation causes Stormorken syndrome.</title>
        <authorList>
            <person name="Misceo D."/>
            <person name="Holmgren A."/>
            <person name="Louch W.E."/>
            <person name="Holme P.A."/>
            <person name="Mizobuchi M."/>
            <person name="Morales R.J."/>
            <person name="De Paula A.M."/>
            <person name="Stray-Pedersen A."/>
            <person name="Lyle R."/>
            <person name="Dalhus B."/>
            <person name="Christensen G."/>
            <person name="Stormorken H."/>
            <person name="Tjoennfjord G.E."/>
            <person name="Frengen E."/>
        </authorList>
    </citation>
    <scope>INVOLVEMENT IN STRMK</scope>
    <scope>VARIANT STRMK TRP-304</scope>
</reference>
<reference key="41">
    <citation type="journal article" date="2014" name="J. Dent. Res.">
        <title>STIM1 and SLC24A4 are critical for enamel maturation.</title>
        <authorList>
            <person name="Wang S."/>
            <person name="Choi M."/>
            <person name="Richardson A.S."/>
            <person name="Reid B.M."/>
            <person name="Seymen F."/>
            <person name="Yildirim M."/>
            <person name="Tuna E."/>
            <person name="Gencay K."/>
            <person name="Simmer J.P."/>
            <person name="Hu J.C."/>
        </authorList>
    </citation>
    <scope>FUNCTION</scope>
    <scope>VARIANT CYS-426</scope>
</reference>
<reference key="42">
    <citation type="journal article" date="2014" name="J. Proteomics">
        <title>An enzyme assisted RP-RPLC approach for in-depth analysis of human liver phosphoproteome.</title>
        <authorList>
            <person name="Bian Y."/>
            <person name="Song C."/>
            <person name="Cheng K."/>
            <person name="Dong M."/>
            <person name="Wang F."/>
            <person name="Huang J."/>
            <person name="Sun D."/>
            <person name="Wang L."/>
            <person name="Ye M."/>
            <person name="Zou H."/>
        </authorList>
    </citation>
    <scope>PHOSPHORYLATION [LARGE SCALE ANALYSIS] AT SER-512; THR-517; SER-519; SER-521; SER-523; SER-567; SER-602 AND SER-608</scope>
    <scope>IDENTIFICATION BY MASS SPECTROMETRY [LARGE SCALE ANALYSIS]</scope>
    <source>
        <tissue>Liver</tissue>
    </source>
</reference>
<reference key="43">
    <citation type="journal article" date="2014" name="Proc. Natl. Acad. Sci. U.S.A.">
        <title>Activating mutations in STIM1 and ORAI1 cause overlapping syndromes of tubular myopathy and congenital miosis.</title>
        <authorList>
            <person name="Nesin V."/>
            <person name="Wiley G."/>
            <person name="Kousi M."/>
            <person name="Ong E.C."/>
            <person name="Lehmann T."/>
            <person name="Nicholl D.J."/>
            <person name="Suri M."/>
            <person name="Shahrizaila N."/>
            <person name="Katsanis N."/>
            <person name="Gaffney P.M."/>
            <person name="Wierenga K.J."/>
            <person name="Tsiokas L."/>
        </authorList>
    </citation>
    <scope>FUNCTION</scope>
    <scope>INVOLVEMENT IN STRMK</scope>
    <scope>VARIANT STRMK TRP-304</scope>
    <scope>CHARACTERIZATION OF VARIANT STRMK TRP-304</scope>
    <scope>MUTAGENESIS OF ASP-76</scope>
</reference>
<reference key="44">
    <citation type="journal article" date="2015" name="Mol. Cell. Biol.">
        <title>A protease-independent function for SPPL3 in NFAT activation.</title>
        <authorList>
            <person name="Makowski S.L."/>
            <person name="Wang Z."/>
            <person name="Pomerantz J.L."/>
        </authorList>
    </citation>
    <scope>INTERACTION WITH SPPL3</scope>
</reference>
<reference key="45">
    <citation type="journal article" date="2015" name="PLoS ONE">
        <title>TMEM203 is a novel regulator of intracellular calcium homeostasis and is required for spermatogenesis.</title>
        <authorList>
            <person name="Shambharkar P.B."/>
            <person name="Bittinger M."/>
            <person name="Latario B."/>
            <person name="Xiong Z."/>
            <person name="Bandyopadhyay S."/>
            <person name="Davis V."/>
            <person name="Lin V."/>
            <person name="Yang Y."/>
            <person name="Valdez R."/>
            <person name="Labow M.A."/>
        </authorList>
    </citation>
    <scope>INTERACTION WITH TMEM203</scope>
</reference>
<reference key="46">
    <citation type="journal article" date="2015" name="Nat. Cell Biol.">
        <title>Proteomic mapping of ER-PM junctions identifies STIMATE as a regulator of Ca(2+) influx.</title>
        <authorList>
            <person name="Jing J."/>
            <person name="He L."/>
            <person name="Sun A."/>
            <person name="Quintana A."/>
            <person name="Ding Y."/>
            <person name="Ma G."/>
            <person name="Tan P."/>
            <person name="Liang X."/>
            <person name="Zheng X."/>
            <person name="Chen L."/>
            <person name="Shi X."/>
            <person name="Zhang S.L."/>
            <person name="Zhong L."/>
            <person name="Huang Y."/>
            <person name="Dong M.Q."/>
            <person name="Walker C.L."/>
            <person name="Hogan P.G."/>
            <person name="Wang Y."/>
            <person name="Zhou Y."/>
        </authorList>
    </citation>
    <scope>FUNCTION</scope>
    <scope>SUBCELLULAR LOCATION</scope>
    <scope>INTERACTION WITH STIMATE</scope>
    <scope>MUTAGENESIS OF ASP-76 AND LEU-258</scope>
</reference>
<reference key="47">
    <citation type="journal article" date="2015" name="Proteomics">
        <title>N-terminome analysis of the human mitochondrial proteome.</title>
        <authorList>
            <person name="Vaca Jacome A.S."/>
            <person name="Rabilloud T."/>
            <person name="Schaeffer-Reiss C."/>
            <person name="Rompais M."/>
            <person name="Ayoub D."/>
            <person name="Lane L."/>
            <person name="Bairoch A."/>
            <person name="Van Dorsselaer A."/>
            <person name="Carapito C."/>
        </authorList>
    </citation>
    <scope>IDENTIFICATION BY MASS SPECTROMETRY [LARGE SCALE ANALYSIS]</scope>
</reference>
<reference key="48">
    <citation type="journal article" date="2016" name="Cell. Physiol. Biochem.">
        <title>Calsequestrin-1 regulates store-operated Ca2+ entry by inhibiting STIM1 aggregation.</title>
        <authorList>
            <person name="Zhang L."/>
            <person name="Wang L."/>
            <person name="Li S."/>
            <person name="Xue J."/>
            <person name="Luo D."/>
        </authorList>
    </citation>
    <scope>INTERACTION WITH ORAI1</scope>
    <scope>SUBCELLULAR LOCATION</scope>
</reference>
<reference key="49">
    <citation type="journal article" date="2017" name="EMBO J.">
        <title>Mitochondria control store-operated Ca(2+) entry through Na(+) and redox signals.</title>
        <authorList>
            <person name="Ben-Kasus Nissim T."/>
            <person name="Zhang X."/>
            <person name="Elazar A."/>
            <person name="Roy S."/>
            <person name="Stolwijk J.A."/>
            <person name="Zhou Y."/>
            <person name="Motiani R.K."/>
            <person name="Gueguinou M."/>
            <person name="Hempel N."/>
            <person name="Hershfinkel M."/>
            <person name="Gill D.L."/>
            <person name="Trebak M."/>
            <person name="Sekler I."/>
        </authorList>
    </citation>
    <scope>FUNCTION</scope>
    <scope>SUBCELLULAR LOCATION</scope>
    <scope>INTERACTION WITH ORAI1</scope>
</reference>
<reference key="50">
    <citation type="journal article" date="2018" name="Cell. Physiol. Biochem.">
        <title>EFHB is a Novel Cytosolic Ca2+ Sensor That Modulates STIM1-SARAF Interaction.</title>
        <authorList>
            <person name="Albarran L."/>
            <person name="Lopez J.J."/>
            <person name="Jardin I."/>
            <person name="Sanchez-Collado J."/>
            <person name="Berna-Erro A."/>
            <person name="Smani T."/>
            <person name="Camello P.J."/>
            <person name="Salido G.M."/>
            <person name="Rosado J.A."/>
        </authorList>
    </citation>
    <scope>INTERACTION WITH EFHB; ORAI1 AND SARAF</scope>
</reference>
<reference key="51">
    <citation type="journal article" date="2020" name="Nat. Commun.">
        <title>The native ORAI channel trio underlies the diversity of Ca2+ signaling events.</title>
        <authorList>
            <person name="Yoast R.E."/>
            <person name="Emrich S.M."/>
            <person name="Zhang X."/>
            <person name="Xin P."/>
            <person name="Johnson M.T."/>
            <person name="Fike A.J."/>
            <person name="Walter V."/>
            <person name="Hempel N."/>
            <person name="Yule D.I."/>
            <person name="Sneyd J."/>
            <person name="Gill D.L."/>
            <person name="Trebak M."/>
        </authorList>
    </citation>
    <scope>FUNCTION</scope>
    <scope>INTERACTION WITH ORAI1; ORAI2 AND ORAI3</scope>
</reference>
<reference key="52">
    <citation type="journal article" date="2008" name="Cell">
        <title>Structural and mechanistic insights into STIM1-mediated initiation of store-operated calcium entry.</title>
        <authorList>
            <person name="Stathopulos P.B."/>
            <person name="Zheng L."/>
            <person name="Li G.Y."/>
            <person name="Plevin M.J."/>
            <person name="Ikura M."/>
        </authorList>
    </citation>
    <scope>STRUCTURE BY NMR OF 58-201 IN COMPLEX WITH CALCIUM</scope>
    <scope>DISULFIDE BOND</scope>
    <scope>FUNCTION</scope>
    <scope>SUBUNIT</scope>
    <scope>DOMAIN</scope>
    <scope>SUBCELLULAR LOCATION</scope>
    <scope>MUTAGENESIS OF GLU-87; PHE-108; GLY-110 AND LEU-195</scope>
</reference>
<reference key="53">
    <citation type="journal article" date="2012" name="Proc. Natl. Acad. Sci. U.S.A.">
        <title>Structural and mechanistic insights into the activation of Stromal interaction molecule 1 (STIM1).</title>
        <authorList>
            <person name="Yang X."/>
            <person name="Jin H."/>
            <person name="Cai X."/>
            <person name="Li S."/>
            <person name="Shen Y."/>
        </authorList>
    </citation>
    <scope>X-RAY CRYSTALLOGRAPHY (1.9 ANGSTROMS) OF 344-444</scope>
    <scope>COILED-COIL DOMAIN</scope>
    <scope>SUBUNIT</scope>
</reference>
<reference key="54">
    <citation type="journal article" date="2013" name="Nat. Commun.">
        <title>STIM1/Orai1 coiled-coil interplay in the regulation of store-operated calcium entry.</title>
        <authorList>
            <person name="Stathopulos P.B."/>
            <person name="Schindl R."/>
            <person name="Fahrner M."/>
            <person name="Zheng L."/>
            <person name="Gasmi-Seabrook G.M."/>
            <person name="Muik M."/>
            <person name="Romanin C."/>
            <person name="Ikura M."/>
        </authorList>
    </citation>
    <scope>STRUCTURE BY NMR OF 312-387 IN COMPLEX WITH ORAI1</scope>
    <scope>INTERACTION WITH ORAI1</scope>
    <scope>SUBUNIT</scope>
    <scope>FUNCTION</scope>
    <scope>COILED COIL</scope>
    <scope>MUTAGENESIS OF 318-GLU--GLU-322; VAL-324; LEU-347; LEU-351; 361-TYR-TYR-362; ALA-380; 382-LYS--LYS-386 AND ILE-383</scope>
    <scope>IDENTIFICATION BY MASS SPECTROMETRY</scope>
</reference>
<reference key="55">
    <citation type="journal article" date="2013" name="PLoS ONE">
        <title>The inhibitory helix controls the intramolecular conformational switching of the C-terminus of STIM1.</title>
        <authorList>
            <person name="Cui B."/>
            <person name="Yang X."/>
            <person name="Li S."/>
            <person name="Lin Z."/>
            <person name="Wang Z."/>
            <person name="Dong C."/>
            <person name="Shen Y."/>
        </authorList>
    </citation>
    <scope>X-RAY CRYSTALLOGRAPHY (2.60 ANGSTROMS) OF 237-340</scope>
    <scope>FUNCTION</scope>
    <scope>COILED COIL</scope>
    <scope>SUBUNIT</scope>
</reference>
<reference key="56">
    <citation type="journal article" date="2012" name="J. Immunol.">
        <title>Antiviral and regulatory T cell immunity in a patient with stromal interaction molecule 1 deficiency.</title>
        <authorList>
            <person name="Fuchs S."/>
            <person name="Rensing-Ehl A."/>
            <person name="Speckmann C."/>
            <person name="Bengsch B."/>
            <person name="Schmitt-Graeff A."/>
            <person name="Bondzio I."/>
            <person name="Maul-Pavicic A."/>
            <person name="Bass T."/>
            <person name="Vraetz T."/>
            <person name="Strahm B."/>
            <person name="Ankermann T."/>
            <person name="Benson M."/>
            <person name="Caliebe A."/>
            <person name="Foelster-Holst R."/>
            <person name="Kaiser P."/>
            <person name="Thimme R."/>
            <person name="Schamel W.W."/>
            <person name="Schwarz K."/>
            <person name="Feske S."/>
            <person name="Ehl S."/>
        </authorList>
    </citation>
    <scope>VARIANT IMD10 CYS-429</scope>
</reference>
<reference key="57">
    <citation type="journal article" date="2013" name="Am. J. Hum. Genet.">
        <title>Constitutive activation of the calcium sensor STIM1 causes tubular-aggregate myopathy.</title>
        <authorList>
            <person name="Boehm J."/>
            <person name="Chevessier F."/>
            <person name="Maues De Paula A."/>
            <person name="Koch C."/>
            <person name="Attarian S."/>
            <person name="Feger C."/>
            <person name="Hantai D."/>
            <person name="Laforet P."/>
            <person name="Ghorab K."/>
            <person name="Vallat J.M."/>
            <person name="Fardeau M."/>
            <person name="Figarella-Branger D."/>
            <person name="Pouget J."/>
            <person name="Romero N.B."/>
            <person name="Koch M."/>
            <person name="Ebel C."/>
            <person name="Levy N."/>
            <person name="Krahn M."/>
            <person name="Eymard B."/>
            <person name="Bartoli M."/>
            <person name="Laporte J."/>
        </authorList>
    </citation>
    <scope>VARIANTS TAM1 GLN-72; GLY-84; ARG-109 AND ASN-109</scope>
    <scope>CHARACTERIZATION OF VARIANTS TAM1 GLN-72; GLY-84; ARG-109 AND ASN-109</scope>
</reference>
<reference key="58">
    <citation type="journal article" date="2014" name="J. Med. Genet.">
        <title>Clinical, histological and genetic characterisation of patients with tubular aggregate myopathy caused by mutations in STIM1.</title>
        <authorList>
            <person name="Boehm J."/>
            <person name="Chevessier F."/>
            <person name="Koch C."/>
            <person name="Peche G.A."/>
            <person name="Mora M."/>
            <person name="Morandi L."/>
            <person name="Pasanisi B."/>
            <person name="Moroni I."/>
            <person name="Tasca G."/>
            <person name="Fattori F."/>
            <person name="Ricci E."/>
            <person name="Penisson-Besnier I."/>
            <person name="Nadaj-Pakleza A."/>
            <person name="Fardeau M."/>
            <person name="Joshi P.R."/>
            <person name="Deschauer M."/>
            <person name="Romero N.B."/>
            <person name="Eymard B."/>
            <person name="Laporte J."/>
        </authorList>
    </citation>
    <scope>VARIANTS TAM1 THR-80; VAL-96; ILE-108; LEU-108 AND ASN-109</scope>
    <scope>CHARACTERIZATION OF VARIANTS TAM1 THR-80; VAL-96; ILE-108; LEU-108 AND ASN-109</scope>
    <scope>FUNCTION</scope>
    <scope>SUBCELLULAR LOCATION</scope>
</reference>
<reference key="59">
    <citation type="journal article" date="2014" name="J. Neurol.">
        <title>Childhood onset tubular aggregate myopathy associated with de novo STIM1 mutations.</title>
        <authorList>
            <person name="Hedberg C."/>
            <person name="Niceta M."/>
            <person name="Fattori F."/>
            <person name="Lindvall B."/>
            <person name="Ciolfi A."/>
            <person name="D'Amico A."/>
            <person name="Tasca G."/>
            <person name="Petrini S."/>
            <person name="Tulinius M."/>
            <person name="Tartaglia M."/>
            <person name="Oldfors A."/>
            <person name="Bertini E."/>
        </authorList>
    </citation>
    <scope>VARIANTS TAM1 ARG-109 AND PHE-115</scope>
</reference>
<reference key="60">
    <citation type="journal article" date="2015" name="Mol. Genet. Metab.">
        <title>York platelet syndrome is a CRAC channelopathy due to gain-of-function mutations in STIM1.</title>
        <authorList>
            <person name="Markello T."/>
            <person name="Chen D."/>
            <person name="Kwan J.Y."/>
            <person name="Horkayne-Szakaly I."/>
            <person name="Morrison A."/>
            <person name="Simakova O."/>
            <person name="Maric I."/>
            <person name="Lozier J."/>
            <person name="Cullinane A.R."/>
            <person name="Kilo T."/>
            <person name="Meister L."/>
            <person name="Pakzad K."/>
            <person name="Bone W."/>
            <person name="Chainani S."/>
            <person name="Lee E."/>
            <person name="Links A."/>
            <person name="Boerkoel C."/>
            <person name="Fischer R."/>
            <person name="Toro C."/>
            <person name="White J.G."/>
            <person name="Gahl W.A."/>
            <person name="Gunay-Aygun M."/>
        </authorList>
    </citation>
    <scope>VARIANTS STRMK PHE-115 AND TRP-304</scope>
</reference>
<reference key="61">
    <citation type="journal article" date="2015" name="Neuromuscul. Disord.">
        <title>50 years to diagnosis: Autosomal dominant tubular aggregate myopathy caused by a novel STIM1 mutation.</title>
        <authorList>
            <person name="Walter M.C."/>
            <person name="Rossius M."/>
            <person name="Zitzelsberger M."/>
            <person name="Vorgerd M."/>
            <person name="Mueller-Felber W."/>
            <person name="Ertl-Wagner B."/>
            <person name="Zhang Y."/>
            <person name="Brinkmeier H."/>
            <person name="Senderek J."/>
            <person name="Schoser B."/>
        </authorList>
    </citation>
    <scope>VARIANT TAM1 ASP-81</scope>
    <scope>CHARACTERIZATION OF VARIANT TAM1 ASP-81</scope>
</reference>
<dbReference type="EMBL" id="U52426">
    <property type="protein sequence ID" value="AAC51627.1"/>
    <property type="molecule type" value="mRNA"/>
</dbReference>
<dbReference type="EMBL" id="AK314928">
    <property type="status" value="NOT_ANNOTATED_CDS"/>
    <property type="molecule type" value="mRNA"/>
</dbReference>
<dbReference type="EMBL" id="AC015689">
    <property type="status" value="NOT_ANNOTATED_CDS"/>
    <property type="molecule type" value="Genomic_DNA"/>
</dbReference>
<dbReference type="EMBL" id="AC087441">
    <property type="status" value="NOT_ANNOTATED_CDS"/>
    <property type="molecule type" value="Genomic_DNA"/>
</dbReference>
<dbReference type="EMBL" id="AC090587">
    <property type="status" value="NOT_ANNOTATED_CDS"/>
    <property type="molecule type" value="Genomic_DNA"/>
</dbReference>
<dbReference type="EMBL" id="AC090804">
    <property type="status" value="NOT_ANNOTATED_CDS"/>
    <property type="molecule type" value="Genomic_DNA"/>
</dbReference>
<dbReference type="EMBL" id="AC107970">
    <property type="status" value="NOT_ANNOTATED_CDS"/>
    <property type="molecule type" value="Genomic_DNA"/>
</dbReference>
<dbReference type="EMBL" id="CH471158">
    <property type="protein sequence ID" value="EAX02581.1"/>
    <property type="molecule type" value="Genomic_DNA"/>
</dbReference>
<dbReference type="EMBL" id="BC021300">
    <property type="protein sequence ID" value="AAH21300.1"/>
    <property type="molecule type" value="mRNA"/>
</dbReference>
<dbReference type="CCDS" id="CCDS60706.1">
    <molecule id="Q13586-2"/>
</dbReference>
<dbReference type="CCDS" id="CCDS7749.1">
    <molecule id="Q13586-1"/>
</dbReference>
<dbReference type="RefSeq" id="NP_001264891.1">
    <molecule id="Q13586-2"/>
    <property type="nucleotide sequence ID" value="NM_001277962.2"/>
</dbReference>
<dbReference type="RefSeq" id="NP_003147.2">
    <molecule id="Q13586-1"/>
    <property type="nucleotide sequence ID" value="NM_003156.3"/>
</dbReference>
<dbReference type="PDB" id="2K60">
    <property type="method" value="NMR"/>
    <property type="chains" value="A=58-201"/>
</dbReference>
<dbReference type="PDB" id="2MAJ">
    <property type="method" value="NMR"/>
    <property type="chains" value="A/C=312-387"/>
</dbReference>
<dbReference type="PDB" id="2MAK">
    <property type="method" value="NMR"/>
    <property type="chains" value="A/C=312-387"/>
</dbReference>
<dbReference type="PDB" id="3TEQ">
    <property type="method" value="X-ray"/>
    <property type="resolution" value="1.90 A"/>
    <property type="chains" value="A/B/C/D=344-444"/>
</dbReference>
<dbReference type="PDB" id="4O9B">
    <property type="method" value="X-ray"/>
    <property type="resolution" value="2.60 A"/>
    <property type="chains" value="A/B/C/D=237-340"/>
</dbReference>
<dbReference type="PDB" id="6YEL">
    <property type="method" value="NMR"/>
    <property type="chains" value="A=234-343"/>
</dbReference>
<dbReference type="PDBsum" id="2K60"/>
<dbReference type="PDBsum" id="2MAJ"/>
<dbReference type="PDBsum" id="2MAK"/>
<dbReference type="PDBsum" id="3TEQ"/>
<dbReference type="PDBsum" id="4O9B"/>
<dbReference type="PDBsum" id="6YEL"/>
<dbReference type="BMRB" id="Q13586"/>
<dbReference type="SMR" id="Q13586"/>
<dbReference type="BioGRID" id="112662">
    <property type="interactions" value="433"/>
</dbReference>
<dbReference type="CORUM" id="Q13586"/>
<dbReference type="DIP" id="DIP-31121N"/>
<dbReference type="ELM" id="Q13586"/>
<dbReference type="FunCoup" id="Q13586">
    <property type="interactions" value="2239"/>
</dbReference>
<dbReference type="IntAct" id="Q13586">
    <property type="interactions" value="141"/>
</dbReference>
<dbReference type="MINT" id="Q13586"/>
<dbReference type="STRING" id="9606.ENSP00000478059"/>
<dbReference type="BindingDB" id="Q13586"/>
<dbReference type="ChEMBL" id="CHEMBL3832644"/>
<dbReference type="ChEMBL" id="CHEMBL4296083"/>
<dbReference type="ChEMBL" id="CHEMBL4296084"/>
<dbReference type="ChEMBL" id="CHEMBL4888450"/>
<dbReference type="ChEMBL" id="CHEMBL4888461"/>
<dbReference type="TCDB" id="1.A.52.1.1">
    <property type="family name" value="the ca(2+) release-activated ca(2+) (crac) channel (crac-c) family"/>
</dbReference>
<dbReference type="GlyConnect" id="1771">
    <property type="glycosylation" value="6 N-Linked glycans (1 site)"/>
</dbReference>
<dbReference type="GlyCosmos" id="Q13586">
    <property type="glycosylation" value="3 sites, 7 glycans"/>
</dbReference>
<dbReference type="GlyGen" id="Q13586">
    <property type="glycosylation" value="8 sites, 11 N-linked glycans (2 sites), 1 O-linked glycan (4 sites)"/>
</dbReference>
<dbReference type="iPTMnet" id="Q13586"/>
<dbReference type="MetOSite" id="Q13586"/>
<dbReference type="PhosphoSitePlus" id="Q13586"/>
<dbReference type="SwissPalm" id="Q13586"/>
<dbReference type="BioMuta" id="STIM1"/>
<dbReference type="DMDM" id="209572721"/>
<dbReference type="jPOST" id="Q13586"/>
<dbReference type="MassIVE" id="Q13586"/>
<dbReference type="PeptideAtlas" id="Q13586"/>
<dbReference type="ProteomicsDB" id="23035"/>
<dbReference type="ProteomicsDB" id="59584">
    <molecule id="Q13586-1"/>
</dbReference>
<dbReference type="Pumba" id="Q13586"/>
<dbReference type="Antibodypedia" id="2591">
    <property type="antibodies" value="554 antibodies from 44 providers"/>
</dbReference>
<dbReference type="DNASU" id="6786"/>
<dbReference type="Ensembl" id="ENST00000300737.8">
    <molecule id="Q13586-1"/>
    <property type="protein sequence ID" value="ENSP00000300737.4"/>
    <property type="gene ID" value="ENSG00000167323.13"/>
</dbReference>
<dbReference type="Ensembl" id="ENST00000527651.5">
    <molecule id="Q13586-2"/>
    <property type="protein sequence ID" value="ENSP00000436208.1"/>
    <property type="gene ID" value="ENSG00000167323.13"/>
</dbReference>
<dbReference type="GeneID" id="6786"/>
<dbReference type="KEGG" id="hsa:6786"/>
<dbReference type="UCSC" id="uc001lyv.3">
    <molecule id="Q13586-1"/>
    <property type="organism name" value="human"/>
</dbReference>
<dbReference type="AGR" id="HGNC:11386"/>
<dbReference type="CTD" id="6786"/>
<dbReference type="DisGeNET" id="6786"/>
<dbReference type="GeneCards" id="STIM1"/>
<dbReference type="HGNC" id="HGNC:11386">
    <property type="gene designation" value="STIM1"/>
</dbReference>
<dbReference type="HPA" id="ENSG00000167323">
    <property type="expression patterns" value="Low tissue specificity"/>
</dbReference>
<dbReference type="MalaCards" id="STIM1"/>
<dbReference type="MIM" id="160565">
    <property type="type" value="phenotype"/>
</dbReference>
<dbReference type="MIM" id="185070">
    <property type="type" value="phenotype"/>
</dbReference>
<dbReference type="MIM" id="605921">
    <property type="type" value="gene"/>
</dbReference>
<dbReference type="MIM" id="612783">
    <property type="type" value="phenotype"/>
</dbReference>
<dbReference type="neXtProt" id="NX_Q13586"/>
<dbReference type="OpenTargets" id="ENSG00000167323"/>
<dbReference type="Orphanet" id="317430">
    <property type="disease" value="Combined immunodeficiency due to STIM1 deficiency"/>
</dbReference>
<dbReference type="Orphanet" id="3204">
    <property type="disease" value="Stormorken-Sjaastad-Langslet syndrome"/>
</dbReference>
<dbReference type="Orphanet" id="2593">
    <property type="disease" value="Tubular aggregate myopathy"/>
</dbReference>
<dbReference type="PharmGKB" id="PA36195"/>
<dbReference type="VEuPathDB" id="HostDB:ENSG00000167323"/>
<dbReference type="eggNOG" id="KOG4403">
    <property type="taxonomic scope" value="Eukaryota"/>
</dbReference>
<dbReference type="GeneTree" id="ENSGT00390000000214"/>
<dbReference type="HOGENOM" id="CLU_010588_0_1_1"/>
<dbReference type="InParanoid" id="Q13586"/>
<dbReference type="OMA" id="FLCCVLK"/>
<dbReference type="OrthoDB" id="9986177at2759"/>
<dbReference type="PAN-GO" id="Q13586">
    <property type="GO annotations" value="7 GO annotations based on evolutionary models"/>
</dbReference>
<dbReference type="PhylomeDB" id="Q13586"/>
<dbReference type="TreeFam" id="TF313487"/>
<dbReference type="PathwayCommons" id="Q13586"/>
<dbReference type="Reactome" id="R-HSA-139853">
    <property type="pathway name" value="Elevation of cytosolic Ca2+ levels"/>
</dbReference>
<dbReference type="Reactome" id="R-HSA-5578775">
    <property type="pathway name" value="Ion homeostasis"/>
</dbReference>
<dbReference type="Reactome" id="R-HSA-983695">
    <property type="pathway name" value="Antigen activates B Cell Receptor (BCR) leading to generation of second messengers"/>
</dbReference>
<dbReference type="SignaLink" id="Q13586"/>
<dbReference type="SIGNOR" id="Q13586"/>
<dbReference type="BioGRID-ORCS" id="6786">
    <property type="hits" value="12 hits in 1158 CRISPR screens"/>
</dbReference>
<dbReference type="ChiTaRS" id="STIM1">
    <property type="organism name" value="human"/>
</dbReference>
<dbReference type="EvolutionaryTrace" id="Q13586"/>
<dbReference type="GeneWiki" id="STIM1"/>
<dbReference type="GenomeRNAi" id="6786"/>
<dbReference type="Pharos" id="Q13586">
    <property type="development level" value="Tbio"/>
</dbReference>
<dbReference type="PRO" id="PR:Q13586"/>
<dbReference type="Proteomes" id="UP000005640">
    <property type="component" value="Chromosome 11"/>
</dbReference>
<dbReference type="RNAct" id="Q13586">
    <property type="molecule type" value="protein"/>
</dbReference>
<dbReference type="Bgee" id="ENSG00000167323">
    <property type="expression patterns" value="Expressed in gastrocnemius and 167 other cell types or tissues"/>
</dbReference>
<dbReference type="ExpressionAtlas" id="Q13586">
    <property type="expression patterns" value="baseline and differential"/>
</dbReference>
<dbReference type="GO" id="GO:0032541">
    <property type="term" value="C:cortical endoplasmic reticulum"/>
    <property type="evidence" value="ECO:0000314"/>
    <property type="project" value="UniProtKB"/>
</dbReference>
<dbReference type="GO" id="GO:0005783">
    <property type="term" value="C:endoplasmic reticulum"/>
    <property type="evidence" value="ECO:0000314"/>
    <property type="project" value="HPA"/>
</dbReference>
<dbReference type="GO" id="GO:0005789">
    <property type="term" value="C:endoplasmic reticulum membrane"/>
    <property type="evidence" value="ECO:0000314"/>
    <property type="project" value="UniProtKB"/>
</dbReference>
<dbReference type="GO" id="GO:0005874">
    <property type="term" value="C:microtubule"/>
    <property type="evidence" value="ECO:0007669"/>
    <property type="project" value="UniProtKB-KW"/>
</dbReference>
<dbReference type="GO" id="GO:0005886">
    <property type="term" value="C:plasma membrane"/>
    <property type="evidence" value="ECO:0000314"/>
    <property type="project" value="UniProtKB"/>
</dbReference>
<dbReference type="GO" id="GO:0044853">
    <property type="term" value="C:plasma membrane raft"/>
    <property type="evidence" value="ECO:0000314"/>
    <property type="project" value="UniProtKB"/>
</dbReference>
<dbReference type="GO" id="GO:0033017">
    <property type="term" value="C:sarcoplasmic reticulum membrane"/>
    <property type="evidence" value="ECO:0000314"/>
    <property type="project" value="UniProtKB"/>
</dbReference>
<dbReference type="GO" id="GO:0005246">
    <property type="term" value="F:calcium channel regulator activity"/>
    <property type="evidence" value="ECO:0000314"/>
    <property type="project" value="UniProtKB"/>
</dbReference>
<dbReference type="GO" id="GO:0005509">
    <property type="term" value="F:calcium ion binding"/>
    <property type="evidence" value="ECO:0000314"/>
    <property type="project" value="UniProtKB"/>
</dbReference>
<dbReference type="GO" id="GO:0042802">
    <property type="term" value="F:identical protein binding"/>
    <property type="evidence" value="ECO:0000353"/>
    <property type="project" value="IntAct"/>
</dbReference>
<dbReference type="GO" id="GO:0051010">
    <property type="term" value="F:microtubule plus-end binding"/>
    <property type="evidence" value="ECO:0000314"/>
    <property type="project" value="UniProtKB"/>
</dbReference>
<dbReference type="GO" id="GO:0002020">
    <property type="term" value="F:protease binding"/>
    <property type="evidence" value="ECO:0000353"/>
    <property type="project" value="UniProtKB"/>
</dbReference>
<dbReference type="GO" id="GO:0032237">
    <property type="term" value="P:activation of store-operated calcium channel activity"/>
    <property type="evidence" value="ECO:0000314"/>
    <property type="project" value="UniProtKB"/>
</dbReference>
<dbReference type="GO" id="GO:0005513">
    <property type="term" value="P:detection of calcium ion"/>
    <property type="evidence" value="ECO:0000314"/>
    <property type="project" value="UniProtKB"/>
</dbReference>
<dbReference type="GO" id="GO:0070166">
    <property type="term" value="P:enamel mineralization"/>
    <property type="evidence" value="ECO:0000315"/>
    <property type="project" value="UniProtKB"/>
</dbReference>
<dbReference type="GO" id="GO:0006874">
    <property type="term" value="P:intracellular calcium ion homeostasis"/>
    <property type="evidence" value="ECO:0000318"/>
    <property type="project" value="GO_Central"/>
</dbReference>
<dbReference type="GO" id="GO:0045762">
    <property type="term" value="P:positive regulation of adenylate cyclase activity"/>
    <property type="evidence" value="ECO:0000314"/>
    <property type="project" value="UniProtKB"/>
</dbReference>
<dbReference type="GO" id="GO:0045766">
    <property type="term" value="P:positive regulation of angiogenesis"/>
    <property type="evidence" value="ECO:0000315"/>
    <property type="project" value="BHF-UCL"/>
</dbReference>
<dbReference type="GO" id="GO:0051924">
    <property type="term" value="P:regulation of calcium ion transport"/>
    <property type="evidence" value="ECO:0000314"/>
    <property type="project" value="UniProtKB"/>
</dbReference>
<dbReference type="GO" id="GO:2001256">
    <property type="term" value="P:regulation of store-operated calcium entry"/>
    <property type="evidence" value="ECO:0000315"/>
    <property type="project" value="UniProtKB"/>
</dbReference>
<dbReference type="GO" id="GO:0002115">
    <property type="term" value="P:store-operated calcium entry"/>
    <property type="evidence" value="ECO:0000314"/>
    <property type="project" value="UniProtKB"/>
</dbReference>
<dbReference type="CDD" id="cd09573">
    <property type="entry name" value="SAM_STIM1"/>
    <property type="match status" value="1"/>
</dbReference>
<dbReference type="CDD" id="cd11722">
    <property type="entry name" value="SOAR"/>
    <property type="match status" value="1"/>
</dbReference>
<dbReference type="FunFam" id="1.10.150.50:FF:000009">
    <property type="entry name" value="Stromal interaction molecule 1"/>
    <property type="match status" value="1"/>
</dbReference>
<dbReference type="FunFam" id="1.10.238.180:FF:000001">
    <property type="entry name" value="Stromal interaction molecule 1"/>
    <property type="match status" value="1"/>
</dbReference>
<dbReference type="FunFam" id="1.10.287.3550:FF:000001">
    <property type="entry name" value="Stromal interaction molecule 1"/>
    <property type="match status" value="1"/>
</dbReference>
<dbReference type="FunFam" id="1.20.5.340:FF:000011">
    <property type="entry name" value="Stromal interaction molecule 1"/>
    <property type="match status" value="1"/>
</dbReference>
<dbReference type="Gene3D" id="1.10.238.180">
    <property type="match status" value="1"/>
</dbReference>
<dbReference type="Gene3D" id="1.10.287.3550">
    <property type="match status" value="1"/>
</dbReference>
<dbReference type="Gene3D" id="1.20.5.340">
    <property type="match status" value="1"/>
</dbReference>
<dbReference type="Gene3D" id="1.10.150.50">
    <property type="entry name" value="Transcription Factor, Ets-1"/>
    <property type="match status" value="1"/>
</dbReference>
<dbReference type="InterPro" id="IPR001660">
    <property type="entry name" value="SAM"/>
</dbReference>
<dbReference type="InterPro" id="IPR013761">
    <property type="entry name" value="SAM/pointed_sf"/>
</dbReference>
<dbReference type="InterPro" id="IPR032393">
    <property type="entry name" value="SOAR"/>
</dbReference>
<dbReference type="InterPro" id="IPR037608">
    <property type="entry name" value="STIM"/>
</dbReference>
<dbReference type="InterPro" id="IPR037609">
    <property type="entry name" value="STIM1_SAM"/>
</dbReference>
<dbReference type="PANTHER" id="PTHR15136:SF9">
    <property type="entry name" value="STROMAL INTERACTION MOLECULE 1"/>
    <property type="match status" value="1"/>
</dbReference>
<dbReference type="PANTHER" id="PTHR15136">
    <property type="entry name" value="STROMAL INTERACTION MOLECULE HOMOLOG"/>
    <property type="match status" value="1"/>
</dbReference>
<dbReference type="Pfam" id="PF07647">
    <property type="entry name" value="SAM_2"/>
    <property type="match status" value="1"/>
</dbReference>
<dbReference type="Pfam" id="PF16533">
    <property type="entry name" value="SOAR"/>
    <property type="match status" value="1"/>
</dbReference>
<dbReference type="SMART" id="SM00454">
    <property type="entry name" value="SAM"/>
    <property type="match status" value="1"/>
</dbReference>
<dbReference type="SUPFAM" id="SSF47769">
    <property type="entry name" value="SAM/Pointed domain"/>
    <property type="match status" value="1"/>
</dbReference>
<dbReference type="PROSITE" id="PS50105">
    <property type="entry name" value="SAM_DOMAIN"/>
    <property type="match status" value="1"/>
</dbReference>
<accession>Q13586</accession>
<accession>E9PQJ4</accession>
<accession>Q8N382</accession>
<comment type="function">
    <text evidence="9 10 11 13 14 15 16 18 20 21 23 25 30 34 35 37 39 40 45 47 49">Acts as a Ca(2+) sensor that gates two major inward rectifying Ca(2+) channels at the plasma membrane: Ca(2+) release-activated Ca(2+) (CRAC) channels and arachidonate-regulated Ca(2+)-selective (ARC) channels (PubMed:15866891, PubMed:16005298, PubMed:16208375, PubMed:16537481, PubMed:16733527, PubMed:16766533, PubMed:16807233, PubMed:18854159, PubMed:19182790, PubMed:19249086, PubMed:19622606, PubMed:19706554, PubMed:22464749, PubMed:24069340, PubMed:24351972, PubMed:24591628, PubMed:25326555, PubMed:26322679, PubMed:28219928, PubMed:32415068). Plays a role in mediating store-operated Ca(2+) entry (SOCE), a Ca(2+) influx following depletion of intracellular Ca(2+) stores. Upon Ca(2+) depletion, translocates from the endoplasmic reticulum to the plasma membrane where it activates CRAC channel pore-forming subunits ORA1, ORA2 and ORAI3 to generate sustained and oscillatory Ca(2+) entry (PubMed:16208375, PubMed:16537481, PubMed:32415068). Involved in enamel formation (PubMed:24621671).</text>
</comment>
<comment type="subunit">
    <text evidence="1 6 7 17 18 20 21 24 25 26 27 29 30 31 32 34 35 41 44 45 46 47 48 49">Monomer in the presence of Ca(2+); it oligomerizes in absence of Ca(2+) (PubMed:18854159). Forms homooligomers and heterooligomers with STIM2 (PubMed:11463338, PubMed:11983428, PubMed:18854159, PubMed:22451904, PubMed:24069340, PubMed:24351972). Interacts with pore-forming subunits of CRAC channels, ORAI1, ORAI2 and ORAI3; this interaction is potentiated upon Ca(2+) store depletion (PubMed:19706554, PubMed:32415068). Interacts (via the transmembrane region and the SOAR/CAD domain) with SPPL3; the interaction promotes the binding of STIM1 to ORAI1 (PubMed:25384971). Interacts (via the SOAR/CAD domain) with ORAI1 (PubMed:17905723, PubMed:19182790, PubMed:19249086, PubMed:24351972, PubMed:27185316, PubMed:28219928, PubMed:30481768). Interacts with MAPRE1; probably required for targeting to the growing microtubule plus ends (PubMed:19632184). Interacts with CRACR2A/EFCAB4B; the interaction is direct and takes place in absence of Ca(2+) (PubMed:20418871). Forms a complex with CRACR2A/EFCAB4B and ORAI1 at low concentration of Ca(2+), the complex dissociates at elevated Ca(2+) concentrations (PubMed:20418871). Interacts with SARAF, promoting a slow inactivation of STIM1-dependent SOCE activity, possibly by facilitating the deoligomerization of STIM1 (PubMed:22464749, PubMed:30481768). Interacts with EFHB; the interaction takes place upon Ca(2+)-store depletion and inhibits the association with SARAF (PubMed:30481768). Interacts with ASPH (isoform 8) (PubMed:22586105). Interacts with SLC35G1; intracellular Ca(2+)-dependent. May interact with ATP1A1, ATP2A2, ATP2B1, ATP2B4, KPNB1 and XPO1; through SLC35G1 (PubMed:22084111). Interacts with TMEM203 (PubMed:25996873). Interacts with STIMATE, promoting STIM1 conformational switch (PubMed:26322679). Interacts with TMEM178A (By similarity). Interacts with CASQ1 (via C-terminal end and preferentially with the monomeric form); this interaction increases in response to a depletion of intracellular Ca(2+), decreases both STIM1 aggregation and clustering, interaction of STIM1 with ORAI1 and store-operated Ca(2+) entry (SOCE) activity (PubMed:27185316). Interacts with ADCY8 (PubMed:22494970).</text>
</comment>
<comment type="interaction">
    <interactant intactId="EBI-448878">
        <id>Q13586</id>
    </interactant>
    <interactant intactId="EBI-739773">
        <id>Q9BSW2</id>
        <label>CRACR2A</label>
    </interactant>
    <organismsDiffer>false</organismsDiffer>
    <experiments>3</experiments>
</comment>
<comment type="interaction">
    <interactant intactId="EBI-448878">
        <id>Q13586</id>
    </interactant>
    <interactant intactId="EBI-25602059">
        <id>Q8N7U6</id>
        <label>EFHB</label>
    </interactant>
    <organismsDiffer>false</organismsDiffer>
    <experiments>3</experiments>
</comment>
<comment type="interaction">
    <interactant intactId="EBI-448878">
        <id>Q13586</id>
    </interactant>
    <interactant intactId="EBI-348399">
        <id>P22607</id>
        <label>FGFR3</label>
    </interactant>
    <organismsDiffer>false</organismsDiffer>
    <experiments>4</experiments>
</comment>
<comment type="interaction">
    <interactant intactId="EBI-448878">
        <id>Q13586</id>
    </interactant>
    <interactant intactId="EBI-8285963">
        <id>Q14957</id>
        <label>GRIN2C</label>
    </interactant>
    <organismsDiffer>false</organismsDiffer>
    <experiments>3</experiments>
</comment>
<comment type="interaction">
    <interactant intactId="EBI-448878">
        <id>Q13586</id>
    </interactant>
    <interactant intactId="EBI-8561769">
        <id>Q5SUL5</id>
        <label>HLA-A</label>
    </interactant>
    <organismsDiffer>false</organismsDiffer>
    <experiments>3</experiments>
</comment>
<comment type="interaction">
    <interactant intactId="EBI-448878">
        <id>Q13586</id>
    </interactant>
    <interactant intactId="EBI-350145">
        <id>P01112</id>
        <label>HRAS</label>
    </interactant>
    <organismsDiffer>false</organismsDiffer>
    <experiments>4</experiments>
</comment>
<comment type="interaction">
    <interactant intactId="EBI-448878">
        <id>Q13586</id>
    </interactant>
    <interactant intactId="EBI-1030755">
        <id>P15260</id>
        <label>IFNGR1</label>
    </interactant>
    <organismsDiffer>false</organismsDiffer>
    <experiments>3</experiments>
</comment>
<comment type="interaction">
    <interactant intactId="EBI-448878">
        <id>Q13586</id>
    </interactant>
    <interactant intactId="EBI-8503746">
        <id>Q9Y5U4</id>
        <label>INSIG2</label>
    </interactant>
    <organismsDiffer>false</organismsDiffer>
    <experiments>3</experiments>
</comment>
<comment type="interaction">
    <interactant intactId="EBI-448878">
        <id>Q13586</id>
    </interactant>
    <interactant intactId="EBI-399080">
        <id>Q92993</id>
        <label>KAT5</label>
    </interactant>
    <organismsDiffer>false</organismsDiffer>
    <experiments>3</experiments>
</comment>
<comment type="interaction">
    <interactant intactId="EBI-448878">
        <id>Q13586</id>
    </interactant>
    <interactant intactId="EBI-11742507">
        <id>Q8TAP4-4</id>
        <label>LMO3</label>
    </interactant>
    <organismsDiffer>false</organismsDiffer>
    <experiments>3</experiments>
</comment>
<comment type="interaction">
    <interactant intactId="EBI-448878">
        <id>Q13586</id>
    </interactant>
    <interactant intactId="EBI-1004115">
        <id>Q15691</id>
        <label>MAPRE1</label>
    </interactant>
    <organismsDiffer>false</organismsDiffer>
    <experiments>2</experiments>
</comment>
<comment type="interaction">
    <interactant intactId="EBI-448878">
        <id>Q13586</id>
    </interactant>
    <interactant intactId="EBI-748974">
        <id>Q96CV9</id>
        <label>OPTN</label>
    </interactant>
    <organismsDiffer>false</organismsDiffer>
    <experiments>3</experiments>
</comment>
<comment type="interaction">
    <interactant intactId="EBI-448878">
        <id>Q13586</id>
    </interactant>
    <interactant intactId="EBI-2291476">
        <id>Q96D31</id>
        <label>ORAI1</label>
    </interactant>
    <organismsDiffer>false</organismsDiffer>
    <experiments>21</experiments>
</comment>
<comment type="interaction">
    <interactant intactId="EBI-448878">
        <id>Q13586</id>
    </interactant>
    <interactant intactId="EBI-979862">
        <id>P30101</id>
        <label>PDIA3</label>
    </interactant>
    <organismsDiffer>false</organismsDiffer>
    <experiments>3</experiments>
</comment>
<comment type="interaction">
    <interactant intactId="EBI-448878">
        <id>Q13586</id>
    </interactant>
    <interactant intactId="EBI-25884072">
        <id>P62937-2</id>
        <label>PPIA</label>
    </interactant>
    <organismsDiffer>false</organismsDiffer>
    <experiments>3</experiments>
</comment>
<comment type="interaction">
    <interactant intactId="EBI-448878">
        <id>Q13586</id>
    </interactant>
    <interactant intactId="EBI-359252">
        <id>P23284</id>
        <label>PPIB</label>
    </interactant>
    <organismsDiffer>false</organismsDiffer>
    <experiments>3</experiments>
</comment>
<comment type="interaction">
    <interactant intactId="EBI-448878">
        <id>Q13586</id>
    </interactant>
    <interactant intactId="EBI-712367">
        <id>Q9UI14</id>
        <label>RABAC1</label>
    </interactant>
    <organismsDiffer>false</organismsDiffer>
    <experiments>3</experiments>
</comment>
<comment type="interaction">
    <interactant intactId="EBI-448878">
        <id>Q13586</id>
    </interactant>
    <interactant intactId="EBI-722561">
        <id>Q96BY9</id>
        <label>SARAF</label>
    </interactant>
    <organismsDiffer>false</organismsDiffer>
    <experiments>4</experiments>
</comment>
<comment type="interaction">
    <interactant intactId="EBI-448878">
        <id>Q13586</id>
    </interactant>
    <interactant intactId="EBI-9090795">
        <id>Q15047-2</id>
        <label>SETDB1</label>
    </interactant>
    <organismsDiffer>false</organismsDiffer>
    <experiments>3</experiments>
</comment>
<comment type="interaction">
    <interactant intactId="EBI-448878">
        <id>Q13586</id>
    </interactant>
    <interactant intactId="EBI-4289564">
        <id>P30825</id>
        <label>SLC7A1</label>
    </interactant>
    <organismsDiffer>false</organismsDiffer>
    <experiments>3</experiments>
</comment>
<comment type="interaction">
    <interactant intactId="EBI-448878">
        <id>Q13586</id>
    </interactant>
    <interactant intactId="EBI-448878">
        <id>Q13586</id>
        <label>STIM1</label>
    </interactant>
    <organismsDiffer>false</organismsDiffer>
    <experiments>9</experiments>
</comment>
<comment type="interaction">
    <interactant intactId="EBI-448878">
        <id>Q13586</id>
    </interactant>
    <interactant intactId="EBI-448891">
        <id>Q9P246</id>
        <label>STIM2</label>
    </interactant>
    <organismsDiffer>false</organismsDiffer>
    <experiments>9</experiments>
</comment>
<comment type="interaction">
    <interactant intactId="EBI-448878">
        <id>Q13586</id>
    </interactant>
    <interactant intactId="EBI-929665">
        <id>P48995</id>
        <label>TRPC1</label>
    </interactant>
    <organismsDiffer>false</organismsDiffer>
    <experiments>6</experiments>
</comment>
<comment type="interaction">
    <interactant intactId="EBI-448878">
        <id>Q13586</id>
    </interactant>
    <interactant intactId="EBI-741480">
        <id>Q9UMX0</id>
        <label>UBQLN1</label>
    </interactant>
    <organismsDiffer>false</organismsDiffer>
    <experiments>3</experiments>
</comment>
<comment type="interaction">
    <interactant intactId="EBI-448878">
        <id>Q13586</id>
    </interactant>
    <interactant intactId="EBI-359832">
        <id>P61981</id>
        <label>YWHAG</label>
    </interactant>
    <organismsDiffer>false</organismsDiffer>
    <experiments>5</experiments>
</comment>
<comment type="interaction">
    <interactant intactId="EBI-448878">
        <id>Q13586</id>
    </interactant>
    <interactant intactId="EBI-25900580">
        <id>Q9Y649</id>
    </interactant>
    <organismsDiffer>false</organismsDiffer>
    <experiments>3</experiments>
</comment>
<comment type="interaction">
    <interactant intactId="EBI-448878">
        <id>Q13586</id>
    </interactant>
    <interactant intactId="EBI-397403">
        <id>P62157</id>
        <label>CALM</label>
    </interactant>
    <organismsDiffer>true</organismsDiffer>
    <experiments>2</experiments>
</comment>
<comment type="subcellular location">
    <subcellularLocation>
        <location>Cell membrane</location>
        <topology evidence="5 10 11 18 21 25 46 47">Single-pass type I membrane protein</topology>
    </subcellularLocation>
    <subcellularLocation>
        <location>Endoplasmic reticulum membrane</location>
        <topology evidence="10 11 18 21 45 46">Single-pass type I membrane protein</topology>
    </subcellularLocation>
    <subcellularLocation>
        <location evidence="24">Cytoplasm</location>
        <location evidence="24">Cytoskeleton</location>
    </subcellularLocation>
    <subcellularLocation>
        <location evidence="40">Sarcoplasmic reticulum</location>
    </subcellularLocation>
    <text evidence="10 11 18 20 21 24 46">Translocates from the endoplasmic reticulum to the cell membrane in response to a depletion of intracellular calcium and is detected at punctae corresponding to junctions between the endoplasmic reticulum and the cell membrane (PubMed:16005298, PubMed:16208375, PubMed:18854159, PubMed:19182790, PubMed:19249086). Associated with the microtubule network at the growing distal tip of microtubules (PubMed:19632184). Colocalizes with ORAI1 at the cell membrane (PubMed:27185316). Colocalizes preferentially with CASQ1 at endoplasmic reticulum in response to a depletion of intracellular calcium (PubMed:27185316).</text>
</comment>
<comment type="alternative products">
    <event type="alternative splicing"/>
    <isoform>
        <id>Q13586-1</id>
        <name>1</name>
        <sequence type="displayed"/>
    </isoform>
    <isoform>
        <id>Q13586-2</id>
        <name>2</name>
        <sequence type="described" ref="VSP_055150 VSP_055151"/>
    </isoform>
</comment>
<comment type="tissue specificity">
    <text evidence="5 6">Ubiquitously expressed in various human primary cells and tumor cell lines.</text>
</comment>
<comment type="domain">
    <text evidence="24">The microtubule tip localization signal (MtLS) motif; mediates interaction with MAPRE1 and targeting to the growing microtubule plus ends.</text>
</comment>
<comment type="domain">
    <text evidence="18">The EF-hand domain is responsible for Ca(2+) sensitivity. It consists of a canonical helix-loop-helix EF motif (alpha1beta1alpha2; EF-hand 1) paired to a second helix-loop-helix EF motif (alpha3beta2alpha4; EF-hand 2). EF-hand 1 binds Ca(2+) whereas EF-hand 2 mediates the interactions with SAM domain.</text>
</comment>
<comment type="domain">
    <text evidence="18">The sterile alpha motif (SAM) domain folds into a characteristic 5-helix bundle (alpha6-alpha10) which interacts with the EF-hand pairs enabling concerted folding and stability of EF-hand and SAM domains.</text>
</comment>
<comment type="domain">
    <text evidence="20 24">The STIM1 Orai-activating region/CRAC-activating domain (SOAR/CAD) directly interacts with ORAI1 subunits and mediates CRAC channel gating.</text>
</comment>
<comment type="domain">
    <text evidence="20">The polybasic Lys-rich region (residues 672-685) functionally interacts with the Pro-rich region of ORAI1 (residues 3-47) and regulates CRAC channel gating at negative membrane potentials.</text>
</comment>
<comment type="PTM">
    <text evidence="5 7 8 12 19">Glycosylation is required for cell surface expression.</text>
</comment>
<comment type="PTM">
    <text evidence="5">Phosphorylated predominantly on Ser residues.</text>
</comment>
<comment type="disease" evidence="22 28">
    <disease id="DI-02551">
        <name>Immunodeficiency 10</name>
        <acronym>IMD10</acronym>
        <description>An immune disorder characterized by recurrent infections, impaired activation and proliferative response of T-cells, decreased T-cell production of cytokines, lymphadenopathy, and normal lymphocytes counts and serum immunoglobulin levels. Additional features include thrombocytopenia, autoimmune hemolytic anemia, myopathy, partial iris hypoplasia, hepatosplenomegaly and defective enamel dentition.</description>
        <dbReference type="MIM" id="612783"/>
    </disease>
    <text>The disease is caused by variants affecting the gene represented in this entry.</text>
</comment>
<comment type="disease" evidence="33 36 40 43">
    <disease id="DI-03765">
        <name>Myopathy, tubular aggregate, 1</name>
        <acronym>TAM1</acronym>
        <description>A rare congenital myopathy characterized by regular arrays of membrane tubules on muscle biopsies without additional histopathological hallmarks. Tubular aggregates in muscle are structures of variable appearance consisting of an outer tubule containing either one or more microtubule-like structures or amorphous material. They may occur in a variety of circumstances, including inherited myopathies, alcohol- and drug-induced myopathies, exercise-induced cramps or muscle weakness.</description>
        <dbReference type="MIM" id="160565"/>
    </disease>
    <text>The disease is caused by variants affecting the gene represented in this entry.</text>
</comment>
<comment type="disease" evidence="37 38 42">
    <disease id="DI-04155">
        <name>Stormorken syndrome</name>
        <acronym>STRMK</acronym>
        <description>A rare autosomal dominant disease characterized by mild bleeding tendency, thrombocytopathy, thrombocytopenia, mild anemia, asplenia, tubular aggregate myopathy, miosis, headache, and ichthyosis.</description>
        <dbReference type="MIM" id="185070"/>
    </disease>
    <text>The disease is caused by variants affecting the gene represented in this entry.</text>
</comment>
<comment type="miscellaneous">
    <text evidence="50">Transfection of STIM1 into cells derived from a rhabdoid tumor and from a rhabdomyosarcoma that do not express detectable levels of STIM1 can induce cell death, suggesting a possible role in the control of rhabdomyosarcomas and rhabdoid tumors.</text>
</comment>
<name>STIM1_HUMAN</name>
<gene>
    <name type="primary">STIM1</name>
    <name evidence="52" type="synonym">GOK</name>
</gene>